<organism>
    <name type="scientific">Homo sapiens</name>
    <name type="common">Human</name>
    <dbReference type="NCBI Taxonomy" id="9606"/>
    <lineage>
        <taxon>Eukaryota</taxon>
        <taxon>Metazoa</taxon>
        <taxon>Chordata</taxon>
        <taxon>Craniata</taxon>
        <taxon>Vertebrata</taxon>
        <taxon>Euteleostomi</taxon>
        <taxon>Mammalia</taxon>
        <taxon>Eutheria</taxon>
        <taxon>Euarchontoglires</taxon>
        <taxon>Primates</taxon>
        <taxon>Haplorrhini</taxon>
        <taxon>Catarrhini</taxon>
        <taxon>Hominidae</taxon>
        <taxon>Homo</taxon>
    </lineage>
</organism>
<feature type="signal peptide" evidence="27">
    <location>
        <begin position="1"/>
        <end position="24"/>
    </location>
</feature>
<feature type="chain" id="PRO_0000017802" description="Phosphatidylcholine-sterol acyltransferase">
    <location>
        <begin position="25"/>
        <end position="440"/>
    </location>
</feature>
<feature type="active site" description="Nucleophile" evidence="45">
    <location>
        <position position="205"/>
    </location>
</feature>
<feature type="active site" description="Charge relay system" evidence="45">
    <location>
        <position position="369"/>
    </location>
</feature>
<feature type="active site" description="Charge relay system" evidence="45">
    <location>
        <position position="401"/>
    </location>
</feature>
<feature type="site" description="Determinant for substrate specificity" evidence="43">
    <location>
        <position position="173"/>
    </location>
</feature>
<feature type="glycosylation site" description="N-linked (GlcNAc...) (complex) asparagine" evidence="15 30">
    <location>
        <position position="44"/>
    </location>
</feature>
<feature type="glycosylation site" description="N-linked (GlcNAc...) (complex) asparagine" evidence="25 30 47">
    <location>
        <position position="108"/>
    </location>
</feature>
<feature type="glycosylation site" description="N-linked (GlcNAc...) (complex) asparagine" evidence="15 25 30 47">
    <location>
        <position position="296"/>
    </location>
</feature>
<feature type="glycosylation site" description="N-linked (GlcNAc...) (complex) asparagine" evidence="25 30 47">
    <location>
        <position position="408"/>
    </location>
</feature>
<feature type="glycosylation site" description="O-linked (GalNAc...) threonine" evidence="30">
    <location>
        <position position="431"/>
    </location>
</feature>
<feature type="glycosylation site" description="O-linked (GalNAc...) serine" evidence="30">
    <location>
        <position position="433"/>
    </location>
</feature>
<feature type="disulfide bond" evidence="25 26 47 48 49">
    <location>
        <begin position="74"/>
        <end position="98"/>
    </location>
</feature>
<feature type="disulfide bond" evidence="25 26 47 48 49">
    <location>
        <begin position="337"/>
        <end position="380"/>
    </location>
</feature>
<feature type="sequence variant" id="VAR_004251" description="In LCATD.">
    <original>L</original>
    <variation>LLLPPAAPFWL</variation>
    <location>
        <position position="17"/>
    </location>
</feature>
<feature type="sequence variant" id="VAR_039020" description="In LCATD." evidence="38">
    <original>N</original>
    <variation>I</variation>
    <location>
        <position position="29"/>
    </location>
</feature>
<feature type="sequence variant" id="VAR_004252" description="In FED; dbSNP:rs121908051." evidence="11">
    <original>P</original>
    <variation>L</variation>
    <location>
        <position position="34"/>
    </location>
</feature>
<feature type="sequence variant" id="VAR_039021" description="In FED; dbSNP:rs121908051." evidence="35">
    <original>P</original>
    <variation>Q</variation>
    <location>
        <position position="34"/>
    </location>
</feature>
<feature type="sequence variant" id="VAR_039022" description="In LCATD; dbSNP:rs971887742." evidence="40">
    <original>T</original>
    <variation>M</variation>
    <location>
        <position position="37"/>
    </location>
</feature>
<feature type="sequence variant" id="VAR_004253" description="In LCATD; dbSNP:rs1461145750." evidence="36">
    <original>G</original>
    <variation>S</variation>
    <location>
        <position position="54"/>
    </location>
</feature>
<feature type="sequence variant" id="VAR_004254" description="In LCATD; dbSNP:rs2058302561." evidence="31">
    <original>G</original>
    <variation>R</variation>
    <location>
        <position position="57"/>
    </location>
</feature>
<feature type="sequence variant" id="VAR_039023" description="In FED; dbSNP:rs748427834." evidence="12">
    <original>V</original>
    <variation>E</variation>
    <location>
        <position position="70"/>
    </location>
</feature>
<feature type="sequence variant" id="VAR_039024" description="Found in a patient with intermediate phenotype between LCATD and FED; reduction of activity." evidence="14">
    <original>G</original>
    <variation>R</variation>
    <location>
        <position position="95"/>
    </location>
</feature>
<feature type="sequence variant" id="VAR_066862" description="In FED; loss of activity." evidence="21">
    <original>W</original>
    <variation>S</variation>
    <location>
        <position position="99"/>
    </location>
</feature>
<feature type="sequence variant" id="VAR_039025" description="In dbSNP:rs1412883954." evidence="12">
    <original>S</original>
    <variation>P</variation>
    <location>
        <position position="115"/>
    </location>
</feature>
<feature type="sequence variant" id="VAR_004255" description="In LCATD; dbSNP:rs28940886." evidence="33 34">
    <original>A</original>
    <variation>T</variation>
    <location>
        <position position="117"/>
    </location>
</feature>
<feature type="sequence variant" id="VAR_039026" description="In FED; dbSNP:rs140068549." evidence="39">
    <original>R</original>
    <variation>C</variation>
    <location>
        <position position="123"/>
    </location>
</feature>
<feature type="sequence variant" id="VAR_066863" description="In a patient with low HDL-cholesterol levels; results in reduced activity." evidence="21">
    <original>EY</original>
    <variation>DN</variation>
    <location>
        <begin position="134"/>
        <end position="135"/>
    </location>
</feature>
<feature type="sequence variant" id="VAR_004256" description="In FED; dbSNP:rs121908050." evidence="18">
    <original>T</original>
    <variation>I</variation>
    <location>
        <position position="147"/>
    </location>
</feature>
<feature type="sequence variant" id="VAR_039027" description="In FED; dbSNP:rs768017317." evidence="35">
    <original>R</original>
    <variation>Q</variation>
    <location>
        <position position="159"/>
    </location>
</feature>
<feature type="sequence variant" id="VAR_004257" description="In LCATD; dbSNP:rs28940887." evidence="34">
    <original>R</original>
    <variation>W</variation>
    <location>
        <position position="159"/>
    </location>
</feature>
<feature type="sequence variant" id="VAR_039028" description="In LCATD; dbSNP:rs1380009545." evidence="12">
    <original>R</original>
    <variation>C</variation>
    <location>
        <position position="164"/>
    </location>
</feature>
<feature type="sequence variant" id="VAR_004258" description="In LCATD; also found in a patient with intermediate phenotype between LCATD and FED; loss of activity; dbSNP:rs769485083." evidence="14 29">
    <original>R</original>
    <variation>H</variation>
    <location>
        <position position="164"/>
    </location>
</feature>
<feature type="sequence variant" id="VAR_039029" description="In dbSNP:rs1369994093." evidence="12">
    <original>A</original>
    <variation>T</variation>
    <location>
        <position position="165"/>
    </location>
</feature>
<feature type="sequence variant" id="VAR_004259" description="In LCATD." evidence="12 22">
    <original>R</original>
    <variation>W</variation>
    <location>
        <position position="171"/>
    </location>
</feature>
<feature type="sequence variant" id="VAR_004260" description="In LCATD; dbSNP:rs749740660.">
    <original>Y</original>
    <variation>N</variation>
    <location>
        <position position="180"/>
    </location>
</feature>
<feature type="sequence variant" id="VAR_004261" description="In dbSNP:rs387906300." evidence="33 34">
    <original>R</original>
    <variation>C</variation>
    <location>
        <position position="182"/>
    </location>
</feature>
<feature type="sequence variant" id="VAR_039030" description="In LCATD." evidence="12">
    <original>S</original>
    <variation>N</variation>
    <location>
        <position position="205"/>
    </location>
</feature>
<feature type="sequence variant" id="VAR_017030" description="In dbSNP:rs4986970." evidence="7 8 17">
    <original>S</original>
    <variation>T</variation>
    <location>
        <position position="232"/>
    </location>
</feature>
<feature type="sequence variant" id="VAR_004262" description="In LCATD; dbSNP:rs28942087." evidence="34">
    <original>L</original>
    <variation>P</variation>
    <location>
        <position position="233"/>
    </location>
</feature>
<feature type="sequence variant" id="VAR_039031" description="In LCATD." evidence="12">
    <original>K</original>
    <variation>N</variation>
    <location>
        <position position="242"/>
    </location>
</feature>
<feature type="sequence variant" id="VAR_066864" description="In a patient with low HDL-cholesterol levels; the mutant is hardly secreted and is catalytically inactive." evidence="21">
    <original>V</original>
    <variation>F</variation>
    <location>
        <position position="246"/>
    </location>
</feature>
<feature type="sequence variant" id="VAR_004263" description="In LCATD; dbSNP:rs121908049." evidence="16">
    <original>N</original>
    <variation>K</variation>
    <location>
        <position position="252"/>
    </location>
</feature>
<feature type="sequence variant" id="VAR_066865" description="In a patient with low HDL-cholesterol levels; the mutant is hardly secreted and is catalytically inactive; dbSNP:rs745320775." evidence="21">
    <original>R</original>
    <variation>C</variation>
    <location>
        <position position="268"/>
    </location>
</feature>
<feature type="sequence variant" id="VAR_039032" description="In LCATD; dbSNP:rs780824776." evidence="12">
    <original>R</original>
    <variation>H</variation>
    <location>
        <position position="268"/>
    </location>
</feature>
<feature type="sequence variant" id="VAR_004264" description="In FED; dbSNP:rs121908054." evidence="10">
    <original>M</original>
    <variation>K</variation>
    <location>
        <position position="276"/>
    </location>
</feature>
<feature type="sequence variant" id="VAR_039033" description="In FED and LCATD." evidence="5 12">
    <original>T</original>
    <variation>A</variation>
    <location>
        <position position="298"/>
    </location>
</feature>
<feature type="sequence variant" id="VAR_039034" description="In LCATD." evidence="12">
    <original>T</original>
    <variation>I</variation>
    <location>
        <position position="298"/>
    </location>
</feature>
<feature type="sequence variant" id="VAR_004265" description="In LCATD; partially defective enzyme; dbSNP:rs121908048." evidence="16 19">
    <original>M</original>
    <variation>I</variation>
    <location>
        <position position="317"/>
    </location>
</feature>
<feature type="sequence variant" id="VAR_066866" description="In a patient with low HDL-cholesterol levels; reduced protein secretion; dbSNP:rs1407191796." evidence="21">
    <original>R</original>
    <variation>C</variation>
    <location>
        <position position="322"/>
    </location>
</feature>
<feature type="sequence variant" id="VAR_039035" description="In LCATD." evidence="40">
    <original>P</original>
    <variation>S</variation>
    <location>
        <position position="331"/>
    </location>
</feature>
<feature type="sequence variant" id="VAR_039036" description="In LCATD; dbSNP:rs776035233." evidence="12 13">
    <original>V</original>
    <variation>M</variation>
    <location>
        <position position="333"/>
    </location>
</feature>
<feature type="sequence variant" id="VAR_066867" description="In FED; results in reduced protein secretion and activity; dbSNP:rs1330635214." evidence="21">
    <original>L</original>
    <variation>F</variation>
    <location>
        <position position="338"/>
    </location>
</feature>
<feature type="sequence variant" id="VAR_004266" description="In LCATD; dbSNP:rs28940888." evidence="7 34">
    <original>T</original>
    <variation>M</variation>
    <location>
        <position position="345"/>
    </location>
</feature>
<feature type="sequence variant" id="VAR_066868" description="In FED; results in reduced activity; dbSNP:rs202017590." evidence="21">
    <original>R</original>
    <variation>C</variation>
    <location>
        <position position="347"/>
    </location>
</feature>
<feature type="sequence variant" id="VAR_004267" description="In FED; dbSNP:rs121908053." evidence="18">
    <original>T</original>
    <variation>M</variation>
    <location>
        <position position="371"/>
    </location>
</feature>
<feature type="sequence variant" id="VAR_039037" description="In a patient with LCATD." evidence="12 17">
    <original>L</original>
    <variation>R</variation>
    <location>
        <position position="396"/>
    </location>
</feature>
<feature type="sequence variant" id="VAR_039038" description="In LCATD." evidence="7">
    <original>F</original>
    <variation>V</variation>
    <location>
        <position position="406"/>
    </location>
</feature>
<feature type="mutagenesis site" description="Increased activity towards PAPC. Increased PAPC/POPC activity ratio." evidence="9">
    <original>E</original>
    <variation>A</variation>
    <location>
        <position position="173"/>
    </location>
</feature>
<feature type="mutagenesis site" description="Little change in enzyme specific activity nor in PAPC/POPC activity ratio." evidence="9">
    <original>E</original>
    <variation>D</variation>
    <location>
        <position position="173"/>
    </location>
</feature>
<feature type="mutagenesis site" description="Decreased enzyme specific activity. Increased PAPC/POPC activity ratio." evidence="9">
    <original>E</original>
    <variation>K</variation>
    <location>
        <position position="173"/>
    </location>
</feature>
<feature type="mutagenesis site" description="Increased activity towards PAPC. Increased PAPC/POPC activity ratio." evidence="9">
    <original>E</original>
    <variation>L</variation>
    <location>
        <position position="173"/>
    </location>
</feature>
<feature type="mutagenesis site" description="Decreased enzyme specific activity. Increased PAPC/POPC activity ratio." evidence="9">
    <original>E</original>
    <variation>Q</variation>
    <location>
        <position position="173"/>
    </location>
</feature>
<feature type="sequence conflict" description="In Ref. 8; CAB56610/AAA59499." evidence="42" ref="8">
    <original>I</original>
    <variation>H</variation>
    <location>
        <position position="257"/>
    </location>
</feature>
<feature type="strand" evidence="51">
    <location>
        <begin position="49"/>
        <end position="52"/>
    </location>
</feature>
<feature type="strand" evidence="51">
    <location>
        <begin position="60"/>
        <end position="63"/>
    </location>
</feature>
<feature type="strand" evidence="51">
    <location>
        <begin position="82"/>
        <end position="86"/>
    </location>
</feature>
<feature type="helix" evidence="51">
    <location>
        <begin position="88"/>
        <end position="91"/>
    </location>
</feature>
<feature type="helix" evidence="51">
    <location>
        <begin position="95"/>
        <end position="103"/>
    </location>
</feature>
<feature type="strand" evidence="51">
    <location>
        <begin position="105"/>
        <end position="107"/>
    </location>
</feature>
<feature type="turn" evidence="51">
    <location>
        <begin position="109"/>
        <end position="111"/>
    </location>
</feature>
<feature type="strand" evidence="51">
    <location>
        <begin position="114"/>
        <end position="117"/>
    </location>
</feature>
<feature type="strand" evidence="51">
    <location>
        <begin position="121"/>
        <end position="123"/>
    </location>
</feature>
<feature type="turn" evidence="50">
    <location>
        <begin position="125"/>
        <end position="128"/>
    </location>
</feature>
<feature type="helix" evidence="51">
    <location>
        <begin position="131"/>
        <end position="134"/>
    </location>
</feature>
<feature type="strand" evidence="51">
    <location>
        <begin position="135"/>
        <end position="137"/>
    </location>
</feature>
<feature type="strand" evidence="51">
    <location>
        <begin position="142"/>
        <end position="145"/>
    </location>
</feature>
<feature type="helix" evidence="51">
    <location>
        <begin position="146"/>
        <end position="153"/>
    </location>
</feature>
<feature type="turn" evidence="51">
    <location>
        <begin position="154"/>
        <end position="156"/>
    </location>
</feature>
<feature type="turn" evidence="51">
    <location>
        <begin position="160"/>
        <end position="162"/>
    </location>
</feature>
<feature type="strand" evidence="51">
    <location>
        <begin position="163"/>
        <end position="165"/>
    </location>
</feature>
<feature type="helix" evidence="51">
    <location>
        <begin position="174"/>
        <end position="176"/>
    </location>
</feature>
<feature type="helix" evidence="51">
    <location>
        <begin position="178"/>
        <end position="195"/>
    </location>
</feature>
<feature type="strand" evidence="51">
    <location>
        <begin position="199"/>
        <end position="204"/>
    </location>
</feature>
<feature type="helix" evidence="51">
    <location>
        <begin position="206"/>
        <end position="217"/>
    </location>
</feature>
<feature type="helix" evidence="51">
    <location>
        <begin position="220"/>
        <end position="226"/>
    </location>
</feature>
<feature type="strand" evidence="51">
    <location>
        <begin position="227"/>
        <end position="234"/>
    </location>
</feature>
<feature type="helix" evidence="51">
    <location>
        <begin position="242"/>
        <end position="248"/>
    </location>
</feature>
<feature type="turn" evidence="51">
    <location>
        <begin position="250"/>
        <end position="252"/>
    </location>
</feature>
<feature type="turn" evidence="51">
    <location>
        <begin position="255"/>
        <end position="257"/>
    </location>
</feature>
<feature type="strand" evidence="52">
    <location>
        <begin position="258"/>
        <end position="260"/>
    </location>
</feature>
<feature type="strand" evidence="51">
    <location>
        <begin position="270"/>
        <end position="272"/>
    </location>
</feature>
<feature type="helix" evidence="51">
    <location>
        <begin position="274"/>
        <end position="276"/>
    </location>
</feature>
<feature type="turn" evidence="51">
    <location>
        <begin position="280"/>
        <end position="282"/>
    </location>
</feature>
<feature type="strand" evidence="51">
    <location>
        <begin position="288"/>
        <end position="291"/>
    </location>
</feature>
<feature type="strand" evidence="51">
    <location>
        <begin position="296"/>
        <end position="298"/>
    </location>
</feature>
<feature type="helix" evidence="52">
    <location>
        <begin position="299"/>
        <end position="301"/>
    </location>
</feature>
<feature type="helix" evidence="51">
    <location>
        <begin position="302"/>
        <end position="308"/>
    </location>
</feature>
<feature type="helix" evidence="51">
    <location>
        <begin position="312"/>
        <end position="321"/>
    </location>
</feature>
<feature type="turn" evidence="51">
    <location>
        <begin position="322"/>
        <end position="327"/>
    </location>
</feature>
<feature type="strand" evidence="51">
    <location>
        <begin position="335"/>
        <end position="350"/>
    </location>
</feature>
<feature type="turn" evidence="51">
    <location>
        <begin position="353"/>
        <end position="357"/>
    </location>
</feature>
<feature type="strand" evidence="51">
    <location>
        <begin position="361"/>
        <end position="373"/>
    </location>
</feature>
<feature type="helix" evidence="51">
    <location>
        <begin position="374"/>
        <end position="377"/>
    </location>
</feature>
<feature type="helix" evidence="51">
    <location>
        <begin position="378"/>
        <end position="383"/>
    </location>
</feature>
<feature type="strand" evidence="51">
    <location>
        <begin position="386"/>
        <end position="389"/>
    </location>
</feature>
<feature type="strand" evidence="51">
    <location>
        <begin position="391"/>
        <end position="397"/>
    </location>
</feature>
<feature type="helix" evidence="51">
    <location>
        <begin position="401"/>
        <end position="403"/>
    </location>
</feature>
<feature type="turn" evidence="51">
    <location>
        <begin position="404"/>
        <end position="406"/>
    </location>
</feature>
<feature type="helix" evidence="51">
    <location>
        <begin position="408"/>
        <end position="419"/>
    </location>
</feature>
<feature type="turn" evidence="51">
    <location>
        <begin position="420"/>
        <end position="422"/>
    </location>
</feature>
<gene>
    <name type="primary">LCAT</name>
</gene>
<proteinExistence type="evidence at protein level"/>
<comment type="function">
    <text evidence="3 4 6 9 20 23 25 32 37">Central enzyme in the extracellular metabolism of plasma lipoproteins. Synthesized mainly in the liver and secreted into plasma where it converts cholesterol and phosphatidylcholines (lecithins) to cholesteryl esters and lysophosphatidylcholines on the surface of high and low density lipoproteins (HDLs and LDLs) (PubMed:10329423, PubMed:19065001, PubMed:26195816). The cholesterol ester is then transported back to the liver. Has a preference for plasma 16:0-18:2 or 18:O-18:2 phosphatidylcholines (PubMed:8820107). Also produced in the brain by primary astrocytes, and esterifies free cholesterol on nascent APOE-containing lipoproteins secreted from glia and influences cerebral spinal fluid (CSF) APOE- and APOA1 levels. Together with APOE and the cholesterol transporter ABCA1, plays a key role in the maturation of glial-derived, nascent lipoproteins. Required for remodeling high-density lipoprotein particles into their spherical forms (PubMed:10722751). Catalyzes the hydrolysis of 1-O-alkyl-2-acetyl-sn-glycero-3-phosphocholine (platelet-activating factor or PAF) to 1-O-alkyl-sn-glycero-3-phosphocholine (lyso-PAF) (PubMed:8016111). Also catalyzes the transfer of the acetate group from PAF to 1-hexadecanoyl-sn-glycero-3-phosphocholine forming lyso-PAF (PubMed:8016111). Catalyzes the esterification of (24S)-hydroxycholesterol (24(S)OH-C), also known as cerebrosterol to produce 24(S)OH-C monoesters (PubMed:24620755).</text>
</comment>
<comment type="catalytic activity">
    <reaction evidence="1 2 3 9 20 24 25 27 37">
        <text>a sterol + a 1,2-diacyl-sn-glycero-3-phosphocholine = a sterol ester + a 1-acyl-sn-glycero-3-phosphocholine</text>
        <dbReference type="Rhea" id="RHEA:21204"/>
        <dbReference type="ChEBI" id="CHEBI:15889"/>
        <dbReference type="ChEBI" id="CHEBI:35915"/>
        <dbReference type="ChEBI" id="CHEBI:57643"/>
        <dbReference type="ChEBI" id="CHEBI:58168"/>
        <dbReference type="EC" id="2.3.1.43"/>
    </reaction>
</comment>
<comment type="catalytic activity">
    <reaction evidence="32">
        <text>a 1-O-alkyl-2-acetyl-sn-glycero-3-phosphocholine + H2O = a 1-O-alkyl-sn-glycero-3-phosphocholine + acetate + H(+)</text>
        <dbReference type="Rhea" id="RHEA:17777"/>
        <dbReference type="ChEBI" id="CHEBI:15377"/>
        <dbReference type="ChEBI" id="CHEBI:15378"/>
        <dbReference type="ChEBI" id="CHEBI:30089"/>
        <dbReference type="ChEBI" id="CHEBI:30909"/>
        <dbReference type="ChEBI" id="CHEBI:36707"/>
        <dbReference type="EC" id="3.1.1.47"/>
    </reaction>
    <physiologicalReaction direction="left-to-right" evidence="46">
        <dbReference type="Rhea" id="RHEA:17778"/>
    </physiologicalReaction>
</comment>
<comment type="catalytic activity">
    <reaction evidence="23">
        <text>a 1-hexadecanoyl-2-acyl-sn-glycero-3-phosphocholine + (24S)-hydroxycholesterol = (24S)-24-hydroxycholesterol ester + 1-hexadecanoyl-sn-glycero-3-phosphocholine</text>
        <dbReference type="Rhea" id="RHEA:43216"/>
        <dbReference type="ChEBI" id="CHEBI:34310"/>
        <dbReference type="ChEBI" id="CHEBI:72998"/>
        <dbReference type="ChEBI" id="CHEBI:77369"/>
        <dbReference type="ChEBI" id="CHEBI:82869"/>
    </reaction>
    <physiologicalReaction direction="left-to-right" evidence="44">
        <dbReference type="Rhea" id="RHEA:43217"/>
    </physiologicalReaction>
</comment>
<comment type="catalytic activity">
    <reaction evidence="23">
        <text>(24S)-hydroxycholesterol + 1-hexadecanoyl-2-(9Z,12Z-octadecadienoyl)-sn-glycero-3-phosphocholine = (24S)-hydroxycholesterol 3-linoleoate + 1-hexadecanoyl-sn-glycero-3-phosphocholine</text>
        <dbReference type="Rhea" id="RHEA:43224"/>
        <dbReference type="ChEBI" id="CHEBI:34310"/>
        <dbReference type="ChEBI" id="CHEBI:72998"/>
        <dbReference type="ChEBI" id="CHEBI:73002"/>
        <dbReference type="ChEBI" id="CHEBI:82875"/>
    </reaction>
    <physiologicalReaction direction="left-to-right" evidence="44">
        <dbReference type="Rhea" id="RHEA:43225"/>
    </physiologicalReaction>
</comment>
<comment type="catalytic activity">
    <reaction evidence="9">
        <text>1-hexadecanoyl-2-(5Z,8Z,11Z,14Z-eicosatetraenoyl)-sn-glycero-3-phosphocholine + cholesterol = cholesteryl (5Z,8Z,11Z,14Z)-eicosatetraenoate + 1-hexadecanoyl-sn-glycero-3-phosphocholine</text>
        <dbReference type="Rhea" id="RHEA:53448"/>
        <dbReference type="ChEBI" id="CHEBI:16113"/>
        <dbReference type="ChEBI" id="CHEBI:72998"/>
        <dbReference type="ChEBI" id="CHEBI:73003"/>
        <dbReference type="ChEBI" id="CHEBI:82751"/>
    </reaction>
    <physiologicalReaction direction="left-to-right" evidence="43">
        <dbReference type="Rhea" id="RHEA:53449"/>
    </physiologicalReaction>
</comment>
<comment type="catalytic activity">
    <reaction evidence="9">
        <text>1-hexadecanoyl-2-(9Z-octadecenoyl)-sn-glycero-3-phosphocholine + cholesterol = cholesteryl (9Z-octadecenoate) + 1-hexadecanoyl-sn-glycero-3-phosphocholine</text>
        <dbReference type="Rhea" id="RHEA:53456"/>
        <dbReference type="ChEBI" id="CHEBI:16113"/>
        <dbReference type="ChEBI" id="CHEBI:46898"/>
        <dbReference type="ChEBI" id="CHEBI:72998"/>
        <dbReference type="ChEBI" id="CHEBI:73001"/>
    </reaction>
    <physiologicalReaction direction="left-to-right" evidence="43">
        <dbReference type="Rhea" id="RHEA:53457"/>
    </physiologicalReaction>
</comment>
<comment type="catalytic activity">
    <reaction evidence="9">
        <text>1-hexadecanoyl-2-(8Z,11Z,14Z-eicosatrienoyl)-sn-glycero-3-phosphocholine + cholesterol = cholesteryl (8Z,11Z,14Z)-eicosatrienoate + 1-hexadecanoyl-sn-glycero-3-phosphocholine</text>
        <dbReference type="Rhea" id="RHEA:53464"/>
        <dbReference type="ChEBI" id="CHEBI:16113"/>
        <dbReference type="ChEBI" id="CHEBI:72998"/>
        <dbReference type="ChEBI" id="CHEBI:84346"/>
        <dbReference type="ChEBI" id="CHEBI:86121"/>
    </reaction>
    <physiologicalReaction direction="left-to-right" evidence="43">
        <dbReference type="Rhea" id="RHEA:53465"/>
    </physiologicalReaction>
</comment>
<comment type="catalytic activity">
    <reaction evidence="9">
        <text>1-hexadecanoyl-2-(5Z,8Z,11Z-eicosatrienoyl)-sn-glycero-3-phosphocholine + cholesterol = cholesteryl (5Z,8Z,11Z)-eicosatrienoate + 1-hexadecanoyl-sn-glycero-3-phosphocholine</text>
        <dbReference type="Rhea" id="RHEA:53460"/>
        <dbReference type="ChEBI" id="CHEBI:16113"/>
        <dbReference type="ChEBI" id="CHEBI:72998"/>
        <dbReference type="ChEBI" id="CHEBI:86119"/>
        <dbReference type="ChEBI" id="CHEBI:88752"/>
    </reaction>
    <physiologicalReaction direction="left-to-right" evidence="43">
        <dbReference type="Rhea" id="RHEA:53461"/>
    </physiologicalReaction>
</comment>
<comment type="catalytic activity">
    <reaction evidence="9">
        <text>1-hexadecanoyl-2-(5Z,8Z,11Z,14Z,17Z-eicosapentaenoyl)-sn-glycero-3-phosphocholine + cholesterol = (5Z,8Z,11Z,14Z,17Z-eicosapentaenoyl)-cholesterol + 1-hexadecanoyl-sn-glycero-3-phosphocholine</text>
        <dbReference type="Rhea" id="RHEA:53468"/>
        <dbReference type="ChEBI" id="CHEBI:16113"/>
        <dbReference type="ChEBI" id="CHEBI:72998"/>
        <dbReference type="ChEBI" id="CHEBI:84969"/>
        <dbReference type="ChEBI" id="CHEBI:86137"/>
    </reaction>
    <physiologicalReaction direction="left-to-right" evidence="43">
        <dbReference type="Rhea" id="RHEA:53469"/>
    </physiologicalReaction>
</comment>
<comment type="catalytic activity">
    <reaction evidence="9">
        <text>1-hexadecanoyl-2-(9Z,12Z-octadecadienoyl)-sn-glycero-3-phosphocholine + cholesterol = cholesteryl (9Z,12Z)-octadecadienoate + 1-hexadecanoyl-sn-glycero-3-phosphocholine</text>
        <dbReference type="Rhea" id="RHEA:53472"/>
        <dbReference type="ChEBI" id="CHEBI:16113"/>
        <dbReference type="ChEBI" id="CHEBI:41509"/>
        <dbReference type="ChEBI" id="CHEBI:72998"/>
        <dbReference type="ChEBI" id="CHEBI:73002"/>
    </reaction>
    <physiologicalReaction direction="left-to-right" evidence="43">
        <dbReference type="Rhea" id="RHEA:53473"/>
    </physiologicalReaction>
</comment>
<comment type="catalytic activity">
    <reaction evidence="9">
        <text>1-hexadecanoyl-2-(6Z,9Z,12Z-octadecatrienoyl)-sn-glycero-3-phosphocholine + cholesterol = (6Z,9Z,12Z-octadecatrienoyl)-cholesterol + 1-hexadecanoyl-sn-glycero-3-phosphocholine</text>
        <dbReference type="Rhea" id="RHEA:53476"/>
        <dbReference type="ChEBI" id="CHEBI:16113"/>
        <dbReference type="ChEBI" id="CHEBI:72998"/>
        <dbReference type="ChEBI" id="CHEBI:84786"/>
        <dbReference type="ChEBI" id="CHEBI:88756"/>
    </reaction>
    <physiologicalReaction direction="left-to-right" evidence="43">
        <dbReference type="Rhea" id="RHEA:53477"/>
    </physiologicalReaction>
</comment>
<comment type="catalytic activity">
    <reaction evidence="9">
        <text>1-hexadecanoyl-2-(11Z,14Z,17Z-eicosatrienoyl)-sn-glycero-3-phosphocholine + cholesterol = (11Z,14Z,17Z-eicosatrienoyl)-cholesterol + 1-hexadecanoyl-sn-glycero-3-phosphocholine</text>
        <dbReference type="Rhea" id="RHEA:53516"/>
        <dbReference type="ChEBI" id="CHEBI:16113"/>
        <dbReference type="ChEBI" id="CHEBI:72998"/>
        <dbReference type="ChEBI" id="CHEBI:137411"/>
        <dbReference type="ChEBI" id="CHEBI:137412"/>
    </reaction>
    <physiologicalReaction direction="left-to-right" evidence="43">
        <dbReference type="Rhea" id="RHEA:53517"/>
    </physiologicalReaction>
</comment>
<comment type="catalytic activity">
    <reaction evidence="9">
        <text>1-hexadecanoyl-2-(9Z,12Z,15Z-octadecatrienoyl)-sn-glycero-3-phosphocholine + cholesterol = (9Z,12Z,15Z-octadecatrienoyl)-cholesterol + 1-hexadecanoyl-sn-glycero-3-phosphocholine</text>
        <dbReference type="Rhea" id="RHEA:53520"/>
        <dbReference type="ChEBI" id="CHEBI:16113"/>
        <dbReference type="ChEBI" id="CHEBI:72998"/>
        <dbReference type="ChEBI" id="CHEBI:84341"/>
        <dbReference type="ChEBI" id="CHEBI:84789"/>
    </reaction>
    <physiologicalReaction direction="left-to-right" evidence="43">
        <dbReference type="Rhea" id="RHEA:53521"/>
    </physiologicalReaction>
</comment>
<comment type="catalytic activity">
    <reaction evidence="9">
        <text>1-hexadecanoyl-2-(9Z,12Z-octadecadienoyl)-sn-glycero-3-phosphocholine + H2O = (9Z,12Z)-octadecadienoate + 1-hexadecanoyl-sn-glycero-3-phosphocholine + H(+)</text>
        <dbReference type="Rhea" id="RHEA:40811"/>
        <dbReference type="ChEBI" id="CHEBI:15377"/>
        <dbReference type="ChEBI" id="CHEBI:15378"/>
        <dbReference type="ChEBI" id="CHEBI:30245"/>
        <dbReference type="ChEBI" id="CHEBI:72998"/>
        <dbReference type="ChEBI" id="CHEBI:73002"/>
    </reaction>
    <physiologicalReaction direction="left-to-right" evidence="43">
        <dbReference type="Rhea" id="RHEA:40812"/>
    </physiologicalReaction>
</comment>
<comment type="catalytic activity">
    <reaction evidence="9">
        <text>1-hexadecanoyl-2-(5Z,8Z,11Z,14Z-eicosatetraenoyl)-sn-glycero-3-phosphocholine + H2O = 1-hexadecanoyl-sn-glycero-3-phosphocholine + (5Z,8Z,11Z,14Z)-eicosatetraenoate + H(+)</text>
        <dbReference type="Rhea" id="RHEA:40427"/>
        <dbReference type="ChEBI" id="CHEBI:15377"/>
        <dbReference type="ChEBI" id="CHEBI:15378"/>
        <dbReference type="ChEBI" id="CHEBI:32395"/>
        <dbReference type="ChEBI" id="CHEBI:72998"/>
        <dbReference type="ChEBI" id="CHEBI:73003"/>
    </reaction>
    <physiologicalReaction direction="left-to-right" evidence="43">
        <dbReference type="Rhea" id="RHEA:40428"/>
    </physiologicalReaction>
</comment>
<comment type="catalytic activity">
    <reaction evidence="32">
        <text>a 1-O-alkyl-2-acetyl-sn-glycero-3-phosphocholine + 1-hexadecanoyl-sn-glycero-3-phosphocholine = 1-hexadecanoyl-2-acetyl-sn-glycero-3-phosphocholine + a 1-O-alkyl-sn-glycero-3-phosphocholine</text>
        <dbReference type="Rhea" id="RHEA:53636"/>
        <dbReference type="ChEBI" id="CHEBI:30909"/>
        <dbReference type="ChEBI" id="CHEBI:36707"/>
        <dbReference type="ChEBI" id="CHEBI:72998"/>
        <dbReference type="ChEBI" id="CHEBI:75219"/>
    </reaction>
    <physiologicalReaction direction="left-to-right" evidence="46">
        <dbReference type="Rhea" id="RHEA:53637"/>
    </physiologicalReaction>
</comment>
<comment type="activity regulation">
    <text evidence="20 23 32">APOA1 is the most potent activator in plasma (PubMed:19065001, PubMed:8016111). Also activated by APOE, APOC1 and APOA4 (PubMed:19065001, PubMed:8016111). Inhibited by haptoglobin and 5,5'-dithiobis-(2-nitrobenzoic acid) (DTNB) (PubMed:24620755, PubMed:8016111).</text>
</comment>
<comment type="biophysicochemical properties">
    <kinetics>
        <KM evidence="3">0.97 mM for LDL</KM>
        <KM evidence="3">0.4 mM for HDL(2)</KM>
        <KM evidence="3">0.1 mM for HDL(3)</KM>
        <KM evidence="32">12.8 uM for 1-O-alkyl-2-acetyl-sn-glycero-3-phosphocholine</KM>
        <KM evidence="23">125.5 uM for (24S)-hydroxycholesterol (in the presence of APOA1)</KM>
        <KM evidence="23">417.3 uM for (24S)-hydroxycholesterol (in the presence of APOE)</KM>
        <Vmax evidence="3">8.3 mmol/min/mg enzyme with LDL as substrate</Vmax>
        <Vmax evidence="3">0.58 mmol/min/mg enzyme with HDL(2) as substrate</Vmax>
        <Vmax evidence="3">2.0 mmol/min/mg enzyme with HDL(3) as substrate</Vmax>
        <Vmax evidence="32">0.2 umol/h/mg enzyme with 1-O-alkyl-2-acetyl-sn-glycero-3-phosphocholine as substrate</Vmax>
        <Vmax evidence="32">12.0 umol/h/mg enzyme with cholesterol as substrate</Vmax>
        <text>Affinity for LDL is 2.3 to 4-fold lower than for HDL. Relative reactivities are 16% for HDL(3), 1.3% for HDL(2) and 6.5% for LDL.</text>
    </kinetics>
</comment>
<comment type="interaction">
    <interactant intactId="EBI-9104464">
        <id>P04180</id>
    </interactant>
    <interactant intactId="EBI-701692">
        <id>P02647</id>
        <label>APOA1</label>
    </interactant>
    <organismsDiffer>false</organismsDiffer>
    <experiments>2</experiments>
</comment>
<comment type="interaction">
    <interactant intactId="EBI-9104464">
        <id>P04180</id>
    </interactant>
    <interactant intactId="EBI-720609">
        <id>O76024</id>
        <label>WFS1</label>
    </interactant>
    <organismsDiffer>false</organismsDiffer>
    <experiments>3</experiments>
</comment>
<comment type="subcellular location">
    <subcellularLocation>
        <location evidence="2 20 27 32 37">Secreted</location>
    </subcellularLocation>
    <text evidence="2 27 37">Secreted into blood plasma (PubMed:10222237, PubMed:3458198, PubMed:8820107). Produced in astrocytes and secreted into cerebral spinal fluid (CSF) (PubMed:10222237).</text>
</comment>
<comment type="tissue specificity">
    <text evidence="2 27 28 37">Detected in blood plasma (PubMed:10222237, PubMed:3458198, PubMed:8820107). Detected in cerebral spinal fluid (at protein level) (PubMed:10222237). Detected in liver (PubMed:3458198, PubMed:3797244). Expressed mainly in brain, liver and testes.</text>
</comment>
<comment type="PTM">
    <text evidence="15 30">O- and N-glycosylated. O-glycosylation on Thr-431 and Ser-433 consists of sialylated galactose beta 1--&gt;3N-acetylgalactosamine structures. N-glycosylated sites contain sialylated triantennary and/or biantennary complex structures.</text>
</comment>
<comment type="disease" evidence="5 7 12 13 14 16 19 22 29 31 33 34 36 38 40">
    <disease id="DI-00642">
        <name>Lecithin-cholesterol acyltransferase deficiency</name>
        <acronym>LCATD</acronym>
        <description>A disorder of lipoprotein metabolism characterized by inadequate esterification of plasmatic cholesterol. Two clinical forms are recognized: complete LCAT deficiency and fish-eye disease. LCATD is generally referred to the complete form which is associated with absence of both alpha and beta LCAT activities resulting in esterification anomalies involving both HDL (alpha-LCAT activity) and LDL (beta-LCAT activity). It causes a typical triad of diffuse corneal opacities, target cell hemolytic anemia, and proteinuria with renal failure.</description>
        <dbReference type="MIM" id="245900"/>
    </disease>
    <text>The disease is caused by variants affecting the gene represented in this entry.</text>
</comment>
<comment type="disease" evidence="10 11 12 18 21 35 39">
    <disease id="DI-00500">
        <name>Fish-eye disease</name>
        <acronym>FED</acronym>
        <description>A disorder of lipoprotein metabolism due to partial lecithin-cholesterol acyltransferase deficiency that affects only alpha-LCAT activity. FED is characterized by low plasma HDL and corneal opacities due to accumulation of cholesterol deposits in the cornea ('fish-eye').</description>
        <dbReference type="MIM" id="136120"/>
    </disease>
    <text>The disease is caused by variants affecting the gene represented in this entry.</text>
</comment>
<comment type="miscellaneous">
    <text>Levels of LCAT activity correlates inversely with leptin levels as well as with obesity for a wide range of BMI values.</text>
</comment>
<comment type="similarity">
    <text evidence="42">Belongs to the AB hydrolase superfamily. Lipase family.</text>
</comment>
<comment type="online information" name="Wikipedia">
    <link uri="https://en.wikipedia.org/wiki/Lecithin-cholesterol_acyltransferase"/>
    <text>Lecithin-cholesterol acyltransferase entry</text>
</comment>
<reference key="1">
    <citation type="journal article" date="1986" name="Nucleic Acids Res.">
        <title>Human lecithin-cholesterol acyltransferase gene: complete gene sequence and sites of expression.</title>
        <authorList>
            <person name="McLean J."/>
            <person name="Wion K."/>
            <person name="Drayna D."/>
            <person name="Fielding C."/>
            <person name="Lawn R."/>
        </authorList>
    </citation>
    <scope>NUCLEOTIDE SEQUENCE [GENOMIC DNA]</scope>
    <scope>TISSUE SPECIFICITY</scope>
</reference>
<reference key="2">
    <citation type="journal article" date="1986" name="Proc. Natl. Acad. Sci. U.S.A.">
        <title>Cloning and expression of human lecithin-cholesterol acyltransferase cDNA.</title>
        <authorList>
            <person name="McLean J."/>
            <person name="Fielding C."/>
            <person name="Drayna D."/>
            <person name="Dieplinger H."/>
            <person name="Baer B."/>
            <person name="Kohr W."/>
            <person name="Henzel W."/>
            <person name="Lawn R."/>
        </authorList>
    </citation>
    <scope>NUCLEOTIDE SEQUENCE [MRNA]</scope>
    <scope>PROTEIN SEQUENCE OF 25-39; 172-182; 269-280 AND 387-406</scope>
    <scope>CATALYTIC ACTIVITY</scope>
    <scope>SUBCELLULAR LOCATION</scope>
    <scope>TISSUE SPECIFICITY</scope>
</reference>
<reference key="3">
    <citation type="submission" date="2003-09" db="EMBL/GenBank/DDBJ databases">
        <authorList>
            <person name="Nickerson D.A."/>
            <person name="Smith J.D."/>
            <person name="Fullerton S.M."/>
            <person name="Clark A.G."/>
            <person name="Stengard J.H."/>
            <person name="Salomaa V."/>
            <person name="Boerwinkle E."/>
            <person name="Sing C.F."/>
            <person name="Weiss K.M."/>
        </authorList>
    </citation>
    <scope>NUCLEOTIDE SEQUENCE [GENOMIC DNA]</scope>
</reference>
<reference key="4">
    <citation type="submission" date="2003-08" db="EMBL/GenBank/DDBJ databases">
        <title>Cloning of human full-length CDSs in BD Creator(TM) system donor vector.</title>
        <authorList>
            <person name="Kalnine N."/>
            <person name="Chen X."/>
            <person name="Rolfs A."/>
            <person name="Halleck A."/>
            <person name="Hines L."/>
            <person name="Eisenstein S."/>
            <person name="Koundinya M."/>
            <person name="Raphael J."/>
            <person name="Moreira D."/>
            <person name="Kelley T."/>
            <person name="LaBaer J."/>
            <person name="Lin Y."/>
            <person name="Phelan M."/>
            <person name="Farmer A."/>
        </authorList>
    </citation>
    <scope>NUCLEOTIDE SEQUENCE [LARGE SCALE MRNA]</scope>
</reference>
<reference key="5">
    <citation type="journal article" date="2004" name="Nature">
        <title>The sequence and analysis of duplication-rich human chromosome 16.</title>
        <authorList>
            <person name="Martin J."/>
            <person name="Han C."/>
            <person name="Gordon L.A."/>
            <person name="Terry A."/>
            <person name="Prabhakar S."/>
            <person name="She X."/>
            <person name="Xie G."/>
            <person name="Hellsten U."/>
            <person name="Chan Y.M."/>
            <person name="Altherr M."/>
            <person name="Couronne O."/>
            <person name="Aerts A."/>
            <person name="Bajorek E."/>
            <person name="Black S."/>
            <person name="Blumer H."/>
            <person name="Branscomb E."/>
            <person name="Brown N.C."/>
            <person name="Bruno W.J."/>
            <person name="Buckingham J.M."/>
            <person name="Callen D.F."/>
            <person name="Campbell C.S."/>
            <person name="Campbell M.L."/>
            <person name="Campbell E.W."/>
            <person name="Caoile C."/>
            <person name="Challacombe J.F."/>
            <person name="Chasteen L.A."/>
            <person name="Chertkov O."/>
            <person name="Chi H.C."/>
            <person name="Christensen M."/>
            <person name="Clark L.M."/>
            <person name="Cohn J.D."/>
            <person name="Denys M."/>
            <person name="Detter J.C."/>
            <person name="Dickson M."/>
            <person name="Dimitrijevic-Bussod M."/>
            <person name="Escobar J."/>
            <person name="Fawcett J.J."/>
            <person name="Flowers D."/>
            <person name="Fotopulos D."/>
            <person name="Glavina T."/>
            <person name="Gomez M."/>
            <person name="Gonzales E."/>
            <person name="Goodstein D."/>
            <person name="Goodwin L.A."/>
            <person name="Grady D.L."/>
            <person name="Grigoriev I."/>
            <person name="Groza M."/>
            <person name="Hammon N."/>
            <person name="Hawkins T."/>
            <person name="Haydu L."/>
            <person name="Hildebrand C.E."/>
            <person name="Huang W."/>
            <person name="Israni S."/>
            <person name="Jett J."/>
            <person name="Jewett P.B."/>
            <person name="Kadner K."/>
            <person name="Kimball H."/>
            <person name="Kobayashi A."/>
            <person name="Krawczyk M.-C."/>
            <person name="Leyba T."/>
            <person name="Longmire J.L."/>
            <person name="Lopez F."/>
            <person name="Lou Y."/>
            <person name="Lowry S."/>
            <person name="Ludeman T."/>
            <person name="Manohar C.F."/>
            <person name="Mark G.A."/>
            <person name="McMurray K.L."/>
            <person name="Meincke L.J."/>
            <person name="Morgan J."/>
            <person name="Moyzis R.K."/>
            <person name="Mundt M.O."/>
            <person name="Munk A.C."/>
            <person name="Nandkeshwar R.D."/>
            <person name="Pitluck S."/>
            <person name="Pollard M."/>
            <person name="Predki P."/>
            <person name="Parson-Quintana B."/>
            <person name="Ramirez L."/>
            <person name="Rash S."/>
            <person name="Retterer J."/>
            <person name="Ricke D.O."/>
            <person name="Robinson D.L."/>
            <person name="Rodriguez A."/>
            <person name="Salamov A."/>
            <person name="Saunders E.H."/>
            <person name="Scott D."/>
            <person name="Shough T."/>
            <person name="Stallings R.L."/>
            <person name="Stalvey M."/>
            <person name="Sutherland R.D."/>
            <person name="Tapia R."/>
            <person name="Tesmer J.G."/>
            <person name="Thayer N."/>
            <person name="Thompson L.S."/>
            <person name="Tice H."/>
            <person name="Torney D.C."/>
            <person name="Tran-Gyamfi M."/>
            <person name="Tsai M."/>
            <person name="Ulanovsky L.E."/>
            <person name="Ustaszewska A."/>
            <person name="Vo N."/>
            <person name="White P.S."/>
            <person name="Williams A.L."/>
            <person name="Wills P.L."/>
            <person name="Wu J.-R."/>
            <person name="Wu K."/>
            <person name="Yang J."/>
            <person name="DeJong P."/>
            <person name="Bruce D."/>
            <person name="Doggett N.A."/>
            <person name="Deaven L."/>
            <person name="Schmutz J."/>
            <person name="Grimwood J."/>
            <person name="Richardson P."/>
            <person name="Rokhsar D.S."/>
            <person name="Eichler E.E."/>
            <person name="Gilna P."/>
            <person name="Lucas S.M."/>
            <person name="Myers R.M."/>
            <person name="Rubin E.M."/>
            <person name="Pennacchio L.A."/>
        </authorList>
    </citation>
    <scope>NUCLEOTIDE SEQUENCE [LARGE SCALE GENOMIC DNA]</scope>
</reference>
<reference key="6">
    <citation type="submission" date="2005-07" db="EMBL/GenBank/DDBJ databases">
        <authorList>
            <person name="Mural R.J."/>
            <person name="Istrail S."/>
            <person name="Sutton G.G."/>
            <person name="Florea L."/>
            <person name="Halpern A.L."/>
            <person name="Mobarry C.M."/>
            <person name="Lippert R."/>
            <person name="Walenz B."/>
            <person name="Shatkay H."/>
            <person name="Dew I."/>
            <person name="Miller J.R."/>
            <person name="Flanigan M.J."/>
            <person name="Edwards N.J."/>
            <person name="Bolanos R."/>
            <person name="Fasulo D."/>
            <person name="Halldorsson B.V."/>
            <person name="Hannenhalli S."/>
            <person name="Turner R."/>
            <person name="Yooseph S."/>
            <person name="Lu F."/>
            <person name="Nusskern D.R."/>
            <person name="Shue B.C."/>
            <person name="Zheng X.H."/>
            <person name="Zhong F."/>
            <person name="Delcher A.L."/>
            <person name="Huson D.H."/>
            <person name="Kravitz S.A."/>
            <person name="Mouchard L."/>
            <person name="Reinert K."/>
            <person name="Remington K.A."/>
            <person name="Clark A.G."/>
            <person name="Waterman M.S."/>
            <person name="Eichler E.E."/>
            <person name="Adams M.D."/>
            <person name="Hunkapiller M.W."/>
            <person name="Myers E.W."/>
            <person name="Venter J.C."/>
        </authorList>
    </citation>
    <scope>NUCLEOTIDE SEQUENCE [LARGE SCALE GENOMIC DNA]</scope>
</reference>
<reference key="7">
    <citation type="journal article" date="2004" name="Genome Res.">
        <title>The status, quality, and expansion of the NIH full-length cDNA project: the Mammalian Gene Collection (MGC).</title>
        <authorList>
            <consortium name="The MGC Project Team"/>
        </authorList>
    </citation>
    <scope>NUCLEOTIDE SEQUENCE [LARGE SCALE MRNA]</scope>
    <source>
        <tissue>Brain</tissue>
    </source>
</reference>
<reference key="8">
    <citation type="journal article" date="1987" name="Biochim. Biophys. Acta">
        <title>The isolation and characterisation of cDNA and genomic clones for human lecithin: cholesterol acyltransferase.</title>
        <authorList>
            <person name="Tata F."/>
            <person name="Chaves M.E."/>
            <person name="Markham A.F."/>
            <person name="Scrace G.D."/>
            <person name="Waterfield M.D."/>
            <person name="McIntyre N."/>
            <person name="Williamson R."/>
            <person name="Humphries S.E."/>
        </authorList>
    </citation>
    <scope>NUCLEOTIDE SEQUENCE [MRNA] OF 17-440</scope>
</reference>
<reference key="9">
    <citation type="journal article" date="1987" name="Biochem. Biophys. Res. Commun.">
        <title>The isolation and characterisation of a cDNA clone for human lecithin:cholesterol acyl transferase and its use to analyse the genes in patients with LCAT deficiency and fish eye disease.</title>
        <authorList>
            <person name="Rogne S."/>
            <person name="Skretting G."/>
            <person name="Larsen F."/>
            <person name="Myklebost O."/>
            <person name="Mevag B."/>
            <person name="Carlson L.A."/>
            <person name="Holmquist L."/>
            <person name="Gjone E."/>
            <person name="Prydz H."/>
        </authorList>
    </citation>
    <scope>NUCLEOTIDE SEQUENCE [GENOMIC DNA] OF 13-440</scope>
</reference>
<reference key="10">
    <citation type="journal article" date="1987" name="J. Biol. Chem.">
        <title>Lecithin:cholesterol acyltransferase. Functional regions and a structural model of the enzyme.</title>
        <authorList>
            <person name="Yang C."/>
            <person name="Manoogian D."/>
            <person name="Pao Q."/>
            <person name="Lee F."/>
            <person name="Knapp R.D."/>
            <person name="Gotto A.M. Jr."/>
            <person name="Pownall H.J."/>
        </authorList>
    </citation>
    <scope>PARTIAL PROTEIN SEQUENCE</scope>
    <scope>DISULFIDE BONDS</scope>
</reference>
<reference key="11">
    <citation type="journal article" date="1994" name="Proc. Natl. Acad. Sci. U.S.A.">
        <title>Hydrolysis and transesterification of platelet-activating factor by lecithin-cholesterol acyltransferase.</title>
        <authorList>
            <person name="Liu M."/>
            <person name="Subbaiah P.V."/>
        </authorList>
    </citation>
    <scope>FUNCTION</scope>
    <scope>CATALYTIC ACTIVITY</scope>
    <scope>SUBCELLULAR LOCATION</scope>
    <scope>ACTIVITY REGULATION</scope>
    <scope>BIOPHYSICOCHEMICAL PROPERTIES</scope>
</reference>
<reference key="12">
    <citation type="journal article" date="1995" name="Protein Sci.">
        <title>Site-specific detection and structural characterization of the glycosylation of human plasma proteins lecithin:cholesterol acyltransferase and apolipoprotein D using HPLC/electrospray mass spectrometry and sequential glycosidase digestion.</title>
        <authorList>
            <person name="Schindler P.A."/>
            <person name="Settineri C.A."/>
            <person name="Collet X."/>
            <person name="Fielding C.J."/>
            <person name="Burlingame A.L."/>
        </authorList>
    </citation>
    <scope>GLYCOSYLATION AT ASN-44; ASN-108; ASN-296; ASN-408; THR-431 AND SER-433</scope>
    <scope>STRUCTURE OF CARBOHYDRATES</scope>
    <scope>IDENTIFICATION BY MASS SPECTROMETRY</scope>
</reference>
<reference key="13">
    <citation type="journal article" date="1996" name="J. Lipid Res.">
        <title>Comparative studies on the substrate specificity of lecithin:cholesterol acyltransferase towards the molecular species of phosphatidylcholine in the plasma of 14 vertebrates.</title>
        <authorList>
            <person name="Subbaiah P.V."/>
            <person name="Liu M."/>
        </authorList>
    </citation>
    <scope>CATALYTIC ACTIVITY</scope>
    <scope>FUNCTION</scope>
    <scope>SUBSTRATE SPECIFICITY</scope>
    <scope>SUBCELLULAR LOCATION</scope>
    <scope>TISSUE SPECIFICITY</scope>
</reference>
<reference key="14">
    <citation type="journal article" date="1999" name="Biochem. Biophys. Res. Commun.">
        <title>Secretion of lecithin:cholesterol acyltransferase by brain neuroglial cell lines.</title>
        <authorList>
            <person name="Collet X."/>
            <person name="Francone O."/>
            <person name="Besnard F."/>
            <person name="Fielding C.J."/>
        </authorList>
    </citation>
    <scope>TISSUE SPECIFICITY</scope>
    <scope>SUBCELLULAR LOCATION</scope>
    <scope>CATALYTIC ACTIVITY</scope>
</reference>
<reference key="15">
    <citation type="journal article" date="1999" name="Biochem. Biophys. Res. Commun.">
        <title>Binding affinity and reactivity of lecithin cholesterol acyltransferase with native lipoproteins.</title>
        <authorList>
            <person name="Kosek A.B."/>
            <person name="Durbin D."/>
            <person name="Jonas A."/>
        </authorList>
    </citation>
    <scope>FUNCTION</scope>
    <scope>CATALYTIC ACTIVITY</scope>
    <scope>BIOPHYSICOCHEMICAL PROPERTIES</scope>
</reference>
<reference key="16">
    <citation type="journal article" date="2000" name="J. Biol. Chem.">
        <title>Formation of spherical, reconstituted high density lipoproteins containing both apolipoproteins A-I and A-II is mediated by lecithin:cholesterol acyltransferase.</title>
        <authorList>
            <person name="Clay M.A."/>
            <person name="Pyle D.H."/>
            <person name="Rye K.A."/>
            <person name="Barter P.J."/>
        </authorList>
    </citation>
    <scope>FUNCTION IN HIGH-DENSITY LIPOPROTEIN PARTICLE REMODELING</scope>
</reference>
<reference key="17">
    <citation type="journal article" date="2002" name="J. Biol. Chem.">
        <title>Serum lysophosphatidic acid is produced through diverse phospholipase pathways.</title>
        <authorList>
            <person name="Aoki J."/>
            <person name="Taira A."/>
            <person name="Takanezawa Y."/>
            <person name="Kishi Y."/>
            <person name="Hama K."/>
            <person name="Kishimoto T."/>
            <person name="Mizuno K."/>
            <person name="Saku K."/>
            <person name="Taguchi R."/>
            <person name="Arai H."/>
        </authorList>
    </citation>
    <scope>FUNCTION</scope>
</reference>
<reference key="18">
    <citation type="journal article" date="2003" name="Biochemistry">
        <title>Negative charge at amino acid 149 is the molecular determinant for substrate specificity of lecithin: cholesterol acyltransferase for phosphatidylcholine containing 20-carbon sn-2 fatty acyl chains.</title>
        <authorList>
            <person name="Zhao Y."/>
            <person name="Wang J."/>
            <person name="Gebre A.K."/>
            <person name="Chisholm J.W."/>
            <person name="Parks J.S."/>
        </authorList>
    </citation>
    <scope>SUBSTRATE SPECIFICITY</scope>
    <scope>MUTAGENESIS OF GLU-173</scope>
    <scope>FUNCTION</scope>
    <scope>CATALYTIC ACTIVITY</scope>
</reference>
<reference key="19">
    <citation type="journal article" date="2005" name="J. Proteome Res.">
        <title>Human plasma N-glycoproteome analysis by immunoaffinity subtraction, hydrazide chemistry, and mass spectrometry.</title>
        <authorList>
            <person name="Liu T."/>
            <person name="Qian W.-J."/>
            <person name="Gritsenko M.A."/>
            <person name="Camp D.G. II"/>
            <person name="Monroe M.E."/>
            <person name="Moore R.J."/>
            <person name="Smith R.D."/>
        </authorList>
    </citation>
    <scope>GLYCOSYLATION [LARGE SCALE ANALYSIS] AT ASN-44 AND ASN-296</scope>
    <source>
        <tissue>Plasma</tissue>
    </source>
</reference>
<reference key="20">
    <citation type="journal article" date="2007" name="Metabolism">
        <title>Relationship of endogenous hyperleptinemia to serum paraoxonase 1, cholesteryl ester transfer protein, and lecithin cholesterol acyltransferase in obese individuals.</title>
        <authorList>
            <person name="Bajnok L."/>
            <person name="Seres I."/>
            <person name="Varga Z."/>
            <person name="Jeges S."/>
            <person name="Peti A."/>
            <person name="Karanyi Z."/>
            <person name="Juhasz A."/>
            <person name="Csongradi E."/>
            <person name="Mezosi E."/>
            <person name="Nagy E.V."/>
            <person name="Paragh G."/>
        </authorList>
    </citation>
    <scope>ASSOCIATION WITH OBESITY</scope>
</reference>
<reference key="21">
    <citation type="journal article" date="2009" name="J. Lipid Res.">
        <title>LCAT synthesized by primary astrocytes esterifies cholesterol on glia-derived lipoproteins.</title>
        <authorList>
            <person name="Hirsch-Reinshagen V."/>
            <person name="Donkin J."/>
            <person name="Stukas S."/>
            <person name="Chan J."/>
            <person name="Wilkinson A."/>
            <person name="Fan J."/>
            <person name="Parks J.S."/>
            <person name="Kuivenhoven J.A."/>
            <person name="Lutjohann D."/>
            <person name="Pritchard H."/>
            <person name="Wellington C.L."/>
        </authorList>
    </citation>
    <scope>ACTIVITY REGULATION</scope>
    <scope>SUBCELLULAR LOCATION</scope>
    <scope>FUNCTION</scope>
</reference>
<reference key="22">
    <citation type="journal article" date="2014" name="J. Neurochem.">
        <title>The enzyme lecithin-cholesterol acyltransferase esterifies cerebrosterol and limits the toxic effect of this oxysterol on SH-SY5Y cells.</title>
        <authorList>
            <person name="La Marca V."/>
            <person name="Spagnuolo M.S."/>
            <person name="Cigliano L."/>
            <person name="Marasco D."/>
            <person name="Abrescia P."/>
        </authorList>
    </citation>
    <scope>FUNCTION</scope>
    <scope>CATALYTIC ACTIVITY</scope>
    <scope>ACTIVITY REGULATION</scope>
    <scope>BIOPHYSICOCHEMICAL PROPERTIES</scope>
</reference>
<reference key="23">
    <citation type="journal article" date="2015" name="J. Lipid Res.">
        <title>The high resolution crystal structure of human LCAT.</title>
        <authorList>
            <person name="Piper D.E."/>
            <person name="Romanow W.G."/>
            <person name="Gunawardane R.N."/>
            <person name="Fordstrom P."/>
            <person name="Masterman S."/>
            <person name="Pan O."/>
            <person name="Thibault S.T."/>
            <person name="Zhang R."/>
            <person name="Meininger D."/>
            <person name="Schwarz M."/>
            <person name="Wang Z."/>
            <person name="King C."/>
            <person name="Zhou M."/>
            <person name="Walker N.P."/>
        </authorList>
    </citation>
    <scope>X-RAY CRYSTALLOGRAPHY (2.65 ANGSTROMS) OF 25-440</scope>
    <scope>DISULFIDE BONDS</scope>
    <scope>FUNCTION</scope>
    <scope>CATALYTIC ACTIVITY</scope>
    <scope>GLYCOSYLATION AT ASN-108; ASN-296 AND ASN-408</scope>
</reference>
<reference key="24">
    <citation type="journal article" date="2015" name="Nat. Commun.">
        <title>Structure and function of lysosomal phospholipase A2 and lecithin:cholesterol acyltransferase.</title>
        <authorList>
            <person name="Glukhova A."/>
            <person name="Hinkovska-Galcheva V."/>
            <person name="Kelly R."/>
            <person name="Abe A."/>
            <person name="Shayman J.A."/>
            <person name="Tesmer J.J."/>
        </authorList>
    </citation>
    <scope>X-RAY CRYSTALLOGRAPHY (8.69 ANGSTROMS) OF 45-421</scope>
    <scope>CATALYTIC ACTIVITY</scope>
    <scope>DISULFIDE BONDS</scope>
    <scope>GLYCOSYLATION AT ASN-108; ASN-296 AND ASN-408</scope>
</reference>
<reference key="25">
    <citation type="journal article" date="1992" name="Biochem. Biophys. Res. Commun.">
        <title>An amino acid exchange in exon I of the human lecithin: cholesterol acyltransferase (LCAT) gene is associated with fish eye disease.</title>
        <authorList>
            <person name="Skretting G."/>
            <person name="Prydz H."/>
        </authorList>
    </citation>
    <scope>VARIANT FED LEU-34</scope>
</reference>
<reference key="26">
    <citation type="journal article" date="1992" name="J. Clin. Invest.">
        <title>Two different allelic mutations in the lecithin-cholesterol acyltransferase gene associated with the fish eye syndrome. Lecithin-cholesterol acyltransferase (Thr123--&gt;Ile) and lecithin-cholesterol acyltransferase (Thr347--&gt;Met).</title>
        <authorList>
            <person name="Klein H.-G."/>
            <person name="Lohse P."/>
            <person name="Pritchard P.H."/>
            <person name="Bojanovski D."/>
            <person name="Schmidt H."/>
            <person name="Brewer H.B. Jr."/>
        </authorList>
    </citation>
    <scope>VARIANTS FED ILE-147 AND MET-371</scope>
</reference>
<reference key="27">
    <citation type="journal article" date="1990" name="Hum. Genet.">
        <title>Lecithin cholesterol acyl transferase deficiency: molecular analysis of a mutated allele.</title>
        <authorList>
            <person name="Taramelli R."/>
            <person name="Pontoglio M."/>
            <person name="Candiani G."/>
            <person name="Ottolenghi S."/>
            <person name="Dieplinger H."/>
            <person name="Catapano A."/>
            <person name="Albers J."/>
            <person name="Vergani C."/>
            <person name="McLean J."/>
        </authorList>
    </citation>
    <scope>VARIANT LCATD TRP-171</scope>
</reference>
<reference key="28">
    <citation type="journal article" date="1991" name="Lancet">
        <title>Differential phenotypic expression by three mutant alleles in familial lecithin:cholesterol acyltransferase deficiency.</title>
        <authorList>
            <person name="Gotoda T."/>
            <person name="Yamada N."/>
            <person name="Murase T."/>
            <person name="Sakuma M."/>
            <person name="Murayama N."/>
            <person name="Shimano H."/>
            <person name="Kozaki K."/>
            <person name="Albers J.J."/>
            <person name="Yazaki Y."/>
            <person name="Akanuma Y."/>
        </authorList>
    </citation>
    <scope>VARIANTS LCATD LYS-252 AND ILE-317</scope>
</reference>
<reference key="29">
    <citation type="journal article" date="1992" name="FEBS Lett.">
        <title>The genetic defect of the original Norwegian lecithin:cholesterol acyltransferase deficiency families.</title>
        <authorList>
            <person name="Skretting G."/>
            <person name="Blomhoff J.P."/>
            <person name="Solheim J."/>
            <person name="Prydz H."/>
        </authorList>
    </citation>
    <scope>VARIANT FED LYS-276</scope>
</reference>
<reference key="30">
    <citation type="journal article" date="1991" name="Biochem. Biophys. Res. Commun.">
        <title>Lecithin-cholesterol acyltransferase (LCAT) deficiency with a missense mutation in exon 6 of the LCAT gene.</title>
        <authorList>
            <person name="Maeda E."/>
            <person name="Naka Y."/>
            <person name="Matozaki T."/>
            <person name="Sakuma M."/>
            <person name="Akanuma Y."/>
            <person name="Yoshino G."/>
            <person name="Kasuga M."/>
        </authorList>
    </citation>
    <scope>VARIANT LCATD ILE-317</scope>
</reference>
<reference key="31">
    <citation type="journal article" date="1993" name="J. Clin. Invest.">
        <title>Genetic and phenotypic heterogeneity in familial lecithin: cholesterol acyltransferase (LCAT) deficiency. Six newly identified defective alleles further contribute to the structural heterogeneity in this disease.</title>
        <authorList>
            <person name="Funke H."/>
            <person name="von Eckardstein A."/>
            <person name="Pritchard P.H."/>
            <person name="Hornby A.E."/>
            <person name="Wiebusch H."/>
            <person name="Motti C."/>
            <person name="Hayden M.R."/>
            <person name="Dachet C."/>
            <person name="Jacotot B."/>
            <person name="Gerdes U."/>
            <person name="Faergeman O."/>
            <person name="Albers J.J."/>
            <person name="Colleoni N."/>
            <person name="Catapano A."/>
            <person name="Frohlich J."/>
            <person name="Assmann G."/>
        </authorList>
    </citation>
    <scope>VARIANTS LCATD THR-117; TRP-159; PRO-233 AND MET-345</scope>
    <scope>VARIANT CYS-182</scope>
</reference>
<reference key="32">
    <citation type="journal article" date="1993" name="Biochim. Biophys. Acta">
        <title>Lecithin:cholesterol acyltransferase deficiency: identification of a causative gene mutation and a co-inherited protein polymorphism.</title>
        <authorList>
            <person name="Hill J.S."/>
            <person name="O K."/>
            <person name="Wang X."/>
            <person name="Pritchard P.H."/>
        </authorList>
    </citation>
    <scope>VARIANT LCATD THR-117</scope>
    <scope>VARIANT CYS-182</scope>
</reference>
<reference key="33">
    <citation type="journal article" date="1995" name="Hum. Genet.">
        <title>A single G to A nucleotide transition in exon IV of the lecithin: cholesterol acyltransferase (LCAT) gene results in an Arg140 to His substitution and causes LCAT-deficiency.</title>
        <authorList>
            <person name="Steyrer E."/>
            <person name="Haubenwallner S."/>
            <person name="Hoerl G."/>
            <person name="Giessauf W."/>
            <person name="Kostner G.M."/>
            <person name="Zechner R."/>
        </authorList>
    </citation>
    <scope>VARIANT LCATD HIS-164</scope>
    <scope>CHARACTERIZATION OF VARIANT LCATD HIS-164</scope>
</reference>
<reference key="34">
    <citation type="journal article" date="1995" name="Hum. Mol. Genet.">
        <title>Deficiency of lecithin:cholesterol acyltransferase due to compound heterozygosity of two novel mutations (Gly33Arg and 30 bp ins) in the LCAT gene.</title>
        <authorList>
            <person name="Wiebusch H."/>
            <person name="Cullen P."/>
            <person name="Owen J.S."/>
            <person name="Collins D."/>
            <person name="Sharp P.S."/>
            <person name="Funke H."/>
            <person name="Assmann G."/>
        </authorList>
    </citation>
    <scope>VARIANTS LCATD ARG-57 AND LEU-LEU-PRO-PRO-ALA-ALA-PRO-PHE-TRP-LEU-17 INS</scope>
</reference>
<reference key="35">
    <citation type="journal article" date="1996" name="Arterioscler. Thromb. Vasc. Biol.">
        <title>Two novel molecular defects in the LCAT gene are associated with fish eye disease.</title>
        <authorList>
            <person name="Kuivenhoven J.A."/>
            <person name="Stalenhoef A.F."/>
            <person name="Hill J.S."/>
            <person name="Demacker P.N."/>
            <person name="Errami A."/>
            <person name="Kastelein J.J."/>
            <person name="Pritchard P.H."/>
        </authorList>
    </citation>
    <scope>VARIANTS FED GLN-34 AND GLN-159</scope>
</reference>
<reference key="36">
    <citation type="journal article" date="1996" name="Hum. Mutat.">
        <title>Complete deficiency of plasma lecithin-cholesterol acyltransferase (LCAT) activity due to a novel homozygous mutation (Gly-30-Ser) in the LCAT gene.</title>
        <authorList>
            <person name="Owen J.S."/>
            <person name="Wiebusch H."/>
            <person name="Cullen P."/>
            <person name="Watts G.F."/>
            <person name="Lima V.L.M."/>
            <person name="Funke H."/>
            <person name="Assmann G."/>
        </authorList>
    </citation>
    <scope>VARIANT LCATD SER-54</scope>
</reference>
<reference key="37">
    <citation type="journal article" date="1996" name="Int. J. Clin. Lab. Res.">
        <title>A novel missense mutation (Asn5--&gt;Ile) in lecithin: cholesterol acyltransferase (LCAT) gene in a Japanese patient with LCAT deficiency.</title>
        <authorList>
            <person name="Okubo M."/>
            <person name="Aoyama Y."/>
            <person name="Shio H."/>
            <person name="Albers J.J."/>
            <person name="Murase T."/>
        </authorList>
    </citation>
    <scope>VARIANT LCATD ILE-29</scope>
</reference>
<reference key="38">
    <citation type="journal article" date="1997" name="Arterioscler. Thromb. Vasc. Biol.">
        <title>Molecular basis of fish-eye disease in a patient from Spain. Characterization of a novel mutation in the LCAT gene and lipid analysis of the cornea.</title>
        <authorList>
            <person name="Blanco-Vaca F."/>
            <person name="Qu S.J."/>
            <person name="Fiol C."/>
            <person name="Fan H.Z."/>
            <person name="Pao Q."/>
            <person name="Marzal-Casacuberta A."/>
            <person name="Albers J.J."/>
            <person name="Hurtado I."/>
            <person name="Gracia V."/>
            <person name="Pinto X."/>
            <person name="Marti T."/>
            <person name="Pownall H.J."/>
        </authorList>
    </citation>
    <scope>VARIANT FED CYS-123</scope>
</reference>
<reference key="39">
    <citation type="journal article" date="1998" name="J. Lipid Res.">
        <title>Transmission of two novel mutations in a pedigree with familial lecithin:cholesterol acyltransferase deficiency: structure-function relationships and studies in a compound heterozygous proband.</title>
        <authorList>
            <person name="Argyropoulos G."/>
            <person name="Jenkins A."/>
            <person name="Klein R.L."/>
            <person name="Lyons T."/>
            <person name="Wagenhorst B."/>
            <person name="St Armand J."/>
            <person name="Marcovina S.M."/>
            <person name="Albers J.J."/>
            <person name="Pritchard P.H."/>
            <person name="Garvey W.T."/>
        </authorList>
    </citation>
    <scope>VARIANTS LCATD MET-37 AND SER-331</scope>
</reference>
<reference key="40">
    <citation type="journal article" date="2001" name="Nephron">
        <title>Hypocomplementemic type II membranoproliferative glomerulonephritis in a male patient with familial lecithin-cholesterol acyltransferase deficiency due to two different allelic mutations.</title>
        <authorList>
            <person name="Sessa A."/>
            <person name="Battini G."/>
            <person name="Meroni M."/>
            <person name="Daidone G."/>
            <person name="Carnera I."/>
            <person name="Brambilla P.L."/>
            <person name="Vigano G."/>
            <person name="Giordano F."/>
            <person name="Pallotti F."/>
            <person name="Torri Tarelli L."/>
            <person name="Calabresi L."/>
            <person name="Rolleri M."/>
            <person name="Bertolini S."/>
        </authorList>
    </citation>
    <scope>VARIANT LCATD ALA-298</scope>
</reference>
<reference key="41">
    <citation type="journal article" date="2003" name="Atherosclerosis">
        <title>A novel LCAT mutation (Phe382--&gt;Val) in a kindred with familial LCAT deficiency and defective apolipoprotein B-100.</title>
        <authorList>
            <person name="Nanjee M.N."/>
            <person name="Stocks J."/>
            <person name="Cooke C.J."/>
            <person name="Molhuizen H.O."/>
            <person name="Marcovina S."/>
            <person name="Crook D."/>
            <person name="Kastelein J.P."/>
            <person name="Miller N.E."/>
        </authorList>
    </citation>
    <scope>VARIANTS LCATD MET-345 AND VAL-406</scope>
    <scope>VARIANT THR-232</scope>
</reference>
<reference key="42">
    <citation type="journal article" date="2003" name="Hum. Mol. Genet.">
        <title>Association of extreme blood lipid profile phenotypic variation with 11 reverse cholesterol transport genes and 10 non-genetic cardiovascular disease risk factors.</title>
        <authorList>
            <person name="Morabia A."/>
            <person name="Cayanis E."/>
            <person name="Costanza M.C."/>
            <person name="Ross B.M."/>
            <person name="Flaherty M.S."/>
            <person name="Alvin G.B."/>
            <person name="Das K."/>
            <person name="Gilliam T.C."/>
        </authorList>
    </citation>
    <scope>VARIANT THR-232</scope>
</reference>
<reference key="43">
    <citation type="journal article" date="2005" name="Arterioscler. Thromb. Vasc. Biol.">
        <title>The molecular basis of lecithin:cholesterol acyltransferase deficiency syndromes: a comprehensive study of molecular and biochemical findings in 13 unrelated Italian families.</title>
        <authorList>
            <person name="Calabresi L."/>
            <person name="Pisciotta L."/>
            <person name="Costantin A."/>
            <person name="Frigerio I."/>
            <person name="Eberini I."/>
            <person name="Alessandrini P."/>
            <person name="Arca M."/>
            <person name="Bon G.B."/>
            <person name="Boscutti G."/>
            <person name="Busnach G."/>
            <person name="Frasca G."/>
            <person name="Gesualdo L."/>
            <person name="Gigante M."/>
            <person name="Lupattelli G."/>
            <person name="Montali A."/>
            <person name="Pizzolitto S."/>
            <person name="Rabbone I."/>
            <person name="Rolleri M."/>
            <person name="Ruotolo G."/>
            <person name="Sampietro T."/>
            <person name="Sessa A."/>
            <person name="Vaudo G."/>
            <person name="Cantafora A."/>
            <person name="Veglia F."/>
            <person name="Calandra S."/>
            <person name="Bertolini S."/>
            <person name="Franceschini G."/>
        </authorList>
    </citation>
    <scope>VARIANTS FED GLU-70 AND ALA-298</scope>
    <scope>VARIANTS LCATD CYS-164; TRP-171; ASN-205; ASN-242; HIS-268; ILE-298 AND MET-333</scope>
    <scope>VARIANTS PRO-115; THR-165 AND ARG-396</scope>
</reference>
<reference key="44">
    <citation type="journal article" date="2006" name="Atherosclerosis">
        <title>Familial lecithin-cholesterol acyltransferase deficiency: biochemical characteristics and molecular analysis of a new LCAT mutation in a Polish family.</title>
        <authorList>
            <person name="Idzior-Walus B."/>
            <person name="Sieradzki J."/>
            <person name="Kostner G."/>
            <person name="Malecki M.T."/>
            <person name="Klupa T."/>
            <person name="Wesolowska T."/>
            <person name="Rostworowski W."/>
            <person name="Hartwich J."/>
            <person name="Walus M."/>
            <person name="Kiec A.D."/>
            <person name="Naruszewicz M."/>
        </authorList>
    </citation>
    <scope>VARIANT LCATD MET-333</scope>
</reference>
<reference key="45">
    <citation type="journal article" date="2006" name="Atherosclerosis">
        <title>Compound heterozygosity (G71R/R140H) in the lecithin:cholesterol acyltransferase (LCAT) gene results in an intermediate phenotype between LCAT-deficiency and fish-eye disease.</title>
        <authorList>
            <person name="Hoerl G."/>
            <person name="Kroisel P.M."/>
            <person name="Wagner E."/>
            <person name="Tiran B."/>
            <person name="Petek E."/>
            <person name="Steyrer E."/>
        </authorList>
    </citation>
    <scope>VARIANT ARG-95</scope>
    <scope>VARIANT LCATD HIS-164</scope>
    <scope>CHARACTERIZATION OF VARIANT ARG-95</scope>
</reference>
<reference key="46">
    <citation type="journal article" date="2006" name="J. Nephrol.">
        <title>LCAT deficiency: molecular and phenotypic characterization of an Italian family.</title>
        <authorList>
            <person name="Gigante M."/>
            <person name="Ranieri E."/>
            <person name="Cerullo G."/>
            <person name="Calabresi L."/>
            <person name="Iolascon A."/>
            <person name="Assmann G."/>
            <person name="Morrone L."/>
            <person name="Pisciotta L."/>
            <person name="Schena F.P."/>
            <person name="Gesualdo L."/>
        </authorList>
    </citation>
    <scope>VARIANTS THR-232 AND ARG-396</scope>
</reference>
<reference key="47">
    <citation type="journal article" date="2011" name="Hum. Mutat.">
        <title>High prevalence of mutations in LCAT in patients with low HDL cholesterol levels in The Netherlands: identification and characterization of eight novel mutations.</title>
        <authorList>
            <person name="Holleboom A.G."/>
            <person name="Kuivenhoven J.A."/>
            <person name="Peelman F."/>
            <person name="Schimmel A.W."/>
            <person name="Peter J."/>
            <person name="Defesche J.C."/>
            <person name="Kastelein J.J."/>
            <person name="Hovingh G.K."/>
            <person name="Stroes E.S."/>
            <person name="Motazacker M.M."/>
        </authorList>
    </citation>
    <scope>VARIANTS 134-GLU-TYR-135 DELINS ASP-ASN; PHE-246; CYS-268 AND CYS-322</scope>
    <scope>VARIANTS FED SER-99; PHE-338 AND CYS-347</scope>
    <scope>CHARACTERIZATION OF VARIANTS 134-GLU-TYR-135 DELINS ASP-ASN; PHE-246; CYS-268 AND CYS-322</scope>
    <scope>CHARACTERIZATION OF VARIANTS FED SER-99; PHE-338 CYS-347 AND CYS-347</scope>
</reference>
<sequence length="440" mass="49578">MGPPGSPWQWVTLLLGLLLPPAAPFWLLNVLFPPHTTPKAELSNHTRPVILVPGCLGNQLEAKLDKPDVVNWMCYRKTEDFFTIWLDLNMFLPLGVDCWIDNTRVVYNRSSGLVSNAPGVQIRVPGFGKTYSVEYLDSSKLAGYLHTLVQNLVNNGYVRDETVRAAPYDWRLEPGQQEEYYRKLAGLVEEMHAAYGKPVFLIGHSLGCLHLLYFLLRQPQAWKDRFIDGFISLGAPWGGSIKPMLVLASGDNQGIPIMSSIKLKEEQRITTTSPWMFPSRMAWPEDHVFISTPSFNYTGRDFQRFFADLHFEEGWYMWLQSRDLLAGLPAPGVEVYCLYGVGLPTPRTYIYDHGFPYTDPVGVLYEDGDDTVATRSTELCGLWQGRQPQPVHLLPLHGIQHLNMVFSNLTLEHINAILLGAYRQGPPASPTASPEPPPPE</sequence>
<dbReference type="EC" id="2.3.1.43" evidence="2 3 9 20 24 25 27"/>
<dbReference type="EC" id="3.1.1.47" evidence="32"/>
<dbReference type="EMBL" id="X04981">
    <property type="protein sequence ID" value="CAA28651.1"/>
    <property type="molecule type" value="Genomic_DNA"/>
</dbReference>
<dbReference type="EMBL" id="M12625">
    <property type="protein sequence ID" value="AAA59498.1"/>
    <property type="molecule type" value="mRNA"/>
</dbReference>
<dbReference type="EMBL" id="AY422210">
    <property type="protein sequence ID" value="AAR03499.1"/>
    <property type="molecule type" value="Genomic_DNA"/>
</dbReference>
<dbReference type="EMBL" id="BT009748">
    <property type="protein sequence ID" value="AAP88750.1"/>
    <property type="molecule type" value="mRNA"/>
</dbReference>
<dbReference type="EMBL" id="AC040162">
    <property type="status" value="NOT_ANNOTATED_CDS"/>
    <property type="molecule type" value="Genomic_DNA"/>
</dbReference>
<dbReference type="EMBL" id="CH471092">
    <property type="protein sequence ID" value="EAW83190.1"/>
    <property type="molecule type" value="Genomic_DNA"/>
</dbReference>
<dbReference type="EMBL" id="BC014781">
    <property type="protein sequence ID" value="AAH14781.1"/>
    <property type="molecule type" value="mRNA"/>
</dbReference>
<dbReference type="EMBL" id="M26268">
    <property type="protein sequence ID" value="AAA59499.1"/>
    <property type="molecule type" value="mRNA"/>
</dbReference>
<dbReference type="EMBL" id="X06537">
    <property type="protein sequence ID" value="CAB56610.1"/>
    <property type="molecule type" value="mRNA"/>
</dbReference>
<dbReference type="EMBL" id="M17959">
    <property type="protein sequence ID" value="AAA59500.1"/>
    <property type="molecule type" value="Genomic_DNA"/>
</dbReference>
<dbReference type="CCDS" id="CCDS10854.1"/>
<dbReference type="PIR" id="A00571">
    <property type="entry name" value="XXHUN"/>
</dbReference>
<dbReference type="RefSeq" id="NP_000220.1">
    <property type="nucleotide sequence ID" value="NM_000229.2"/>
</dbReference>
<dbReference type="PDB" id="4X96">
    <property type="method" value="X-ray"/>
    <property type="resolution" value="8.69 A"/>
    <property type="chains" value="A/B/C/D=45-421"/>
</dbReference>
<dbReference type="PDB" id="4XWG">
    <property type="method" value="X-ray"/>
    <property type="resolution" value="2.65 A"/>
    <property type="chains" value="A=25-440"/>
</dbReference>
<dbReference type="PDB" id="4XX1">
    <property type="method" value="X-ray"/>
    <property type="resolution" value="3.60 A"/>
    <property type="chains" value="A/B/J=25-440"/>
</dbReference>
<dbReference type="PDB" id="5BV7">
    <property type="method" value="X-ray"/>
    <property type="resolution" value="2.45 A"/>
    <property type="chains" value="A=25-440"/>
</dbReference>
<dbReference type="PDB" id="5TXF">
    <property type="method" value="X-ray"/>
    <property type="resolution" value="3.10 A"/>
    <property type="chains" value="A/B/C/D=25-440"/>
</dbReference>
<dbReference type="PDB" id="6MVD">
    <property type="method" value="X-ray"/>
    <property type="resolution" value="3.10 A"/>
    <property type="chains" value="A/B=45-421"/>
</dbReference>
<dbReference type="PDBsum" id="4X96"/>
<dbReference type="PDBsum" id="4XWG"/>
<dbReference type="PDBsum" id="4XX1"/>
<dbReference type="PDBsum" id="5BV7"/>
<dbReference type="PDBsum" id="5TXF"/>
<dbReference type="PDBsum" id="6MVD"/>
<dbReference type="SMR" id="P04180"/>
<dbReference type="BioGRID" id="110123">
    <property type="interactions" value="6"/>
</dbReference>
<dbReference type="DIP" id="DIP-29620N"/>
<dbReference type="FunCoup" id="P04180">
    <property type="interactions" value="144"/>
</dbReference>
<dbReference type="IntAct" id="P04180">
    <property type="interactions" value="2"/>
</dbReference>
<dbReference type="STRING" id="9606.ENSP00000264005"/>
<dbReference type="BindingDB" id="P04180"/>
<dbReference type="ChEMBL" id="CHEMBL5942"/>
<dbReference type="SwissLipids" id="SLP:000000660"/>
<dbReference type="ESTHER" id="human-LCAT">
    <property type="family name" value="PC-sterol_acyltransferase"/>
</dbReference>
<dbReference type="GlyConnect" id="495">
    <property type="glycosylation" value="13 N-Linked glycans (2 sites)"/>
</dbReference>
<dbReference type="GlyCosmos" id="P04180">
    <property type="glycosylation" value="6 sites, 18 glycans"/>
</dbReference>
<dbReference type="GlyGen" id="P04180">
    <property type="glycosylation" value="8 sites, 27 N-linked glycans (3 sites), 1 O-linked glycan (1 site)"/>
</dbReference>
<dbReference type="iPTMnet" id="P04180"/>
<dbReference type="PhosphoSitePlus" id="P04180"/>
<dbReference type="BioMuta" id="LCAT"/>
<dbReference type="DMDM" id="125993"/>
<dbReference type="jPOST" id="P04180"/>
<dbReference type="MassIVE" id="P04180"/>
<dbReference type="PaxDb" id="9606-ENSP00000264005"/>
<dbReference type="PeptideAtlas" id="P04180"/>
<dbReference type="ProteomicsDB" id="51671"/>
<dbReference type="ABCD" id="P04180">
    <property type="antibodies" value="3 sequenced antibodies"/>
</dbReference>
<dbReference type="Antibodypedia" id="15960">
    <property type="antibodies" value="423 antibodies from 34 providers"/>
</dbReference>
<dbReference type="DNASU" id="3931"/>
<dbReference type="Ensembl" id="ENST00000264005.10">
    <property type="protein sequence ID" value="ENSP00000264005.5"/>
    <property type="gene ID" value="ENSG00000213398.8"/>
</dbReference>
<dbReference type="GeneID" id="3931"/>
<dbReference type="KEGG" id="hsa:3931"/>
<dbReference type="MANE-Select" id="ENST00000264005.10">
    <property type="protein sequence ID" value="ENSP00000264005.5"/>
    <property type="RefSeq nucleotide sequence ID" value="NM_000229.2"/>
    <property type="RefSeq protein sequence ID" value="NP_000220.1"/>
</dbReference>
<dbReference type="UCSC" id="uc002euy.2">
    <property type="organism name" value="human"/>
</dbReference>
<dbReference type="AGR" id="HGNC:6522"/>
<dbReference type="CTD" id="3931"/>
<dbReference type="DisGeNET" id="3931"/>
<dbReference type="GeneCards" id="LCAT"/>
<dbReference type="HGNC" id="HGNC:6522">
    <property type="gene designation" value="LCAT"/>
</dbReference>
<dbReference type="HPA" id="ENSG00000213398">
    <property type="expression patterns" value="Tissue enhanced (liver)"/>
</dbReference>
<dbReference type="MalaCards" id="LCAT"/>
<dbReference type="MIM" id="136120">
    <property type="type" value="phenotype"/>
</dbReference>
<dbReference type="MIM" id="245900">
    <property type="type" value="phenotype"/>
</dbReference>
<dbReference type="MIM" id="606967">
    <property type="type" value="gene"/>
</dbReference>
<dbReference type="neXtProt" id="NX_P04180"/>
<dbReference type="OpenTargets" id="ENSG00000213398"/>
<dbReference type="Orphanet" id="79293">
    <property type="disease" value="Familial LCAT deficiency"/>
</dbReference>
<dbReference type="Orphanet" id="79292">
    <property type="disease" value="Fish-eye disease"/>
</dbReference>
<dbReference type="PharmGKB" id="PA226"/>
<dbReference type="VEuPathDB" id="HostDB:ENSG00000213398"/>
<dbReference type="eggNOG" id="KOG2369">
    <property type="taxonomic scope" value="Eukaryota"/>
</dbReference>
<dbReference type="GeneTree" id="ENSGT00940000160052"/>
<dbReference type="InParanoid" id="P04180"/>
<dbReference type="OMA" id="VVNWLCY"/>
<dbReference type="OrthoDB" id="190846at2759"/>
<dbReference type="PAN-GO" id="P04180">
    <property type="GO annotations" value="3 GO annotations based on evolutionary models"/>
</dbReference>
<dbReference type="PhylomeDB" id="P04180"/>
<dbReference type="TreeFam" id="TF313258"/>
<dbReference type="BRENDA" id="2.3.1.43">
    <property type="organism ID" value="2681"/>
</dbReference>
<dbReference type="PathwayCommons" id="P04180"/>
<dbReference type="Reactome" id="R-HSA-8964058">
    <property type="pathway name" value="HDL remodeling"/>
</dbReference>
<dbReference type="SABIO-RK" id="P04180"/>
<dbReference type="SignaLink" id="P04180"/>
<dbReference type="SIGNOR" id="P04180"/>
<dbReference type="BioGRID-ORCS" id="3931">
    <property type="hits" value="11 hits in 1156 CRISPR screens"/>
</dbReference>
<dbReference type="ChiTaRS" id="LCAT">
    <property type="organism name" value="human"/>
</dbReference>
<dbReference type="EvolutionaryTrace" id="P04180"/>
<dbReference type="GeneWiki" id="Lecithin%E2%80%94cholesterol_acyltransferase"/>
<dbReference type="GenomeRNAi" id="3931"/>
<dbReference type="Pharos" id="P04180">
    <property type="development level" value="Tchem"/>
</dbReference>
<dbReference type="PRO" id="PR:P04180"/>
<dbReference type="Proteomes" id="UP000005640">
    <property type="component" value="Chromosome 16"/>
</dbReference>
<dbReference type="RNAct" id="P04180">
    <property type="molecule type" value="protein"/>
</dbReference>
<dbReference type="Bgee" id="ENSG00000213398">
    <property type="expression patterns" value="Expressed in right lobe of liver and 123 other cell types or tissues"/>
</dbReference>
<dbReference type="ExpressionAtlas" id="P04180">
    <property type="expression patterns" value="baseline and differential"/>
</dbReference>
<dbReference type="GO" id="GO:0070062">
    <property type="term" value="C:extracellular exosome"/>
    <property type="evidence" value="ECO:0007005"/>
    <property type="project" value="UniProtKB"/>
</dbReference>
<dbReference type="GO" id="GO:0005576">
    <property type="term" value="C:extracellular region"/>
    <property type="evidence" value="ECO:0000304"/>
    <property type="project" value="Reactome"/>
</dbReference>
<dbReference type="GO" id="GO:0005615">
    <property type="term" value="C:extracellular space"/>
    <property type="evidence" value="ECO:0000314"/>
    <property type="project" value="UniProtKB"/>
</dbReference>
<dbReference type="GO" id="GO:0034364">
    <property type="term" value="C:high-density lipoprotein particle"/>
    <property type="evidence" value="ECO:0000314"/>
    <property type="project" value="BHF-UCL"/>
</dbReference>
<dbReference type="GO" id="GO:0003847">
    <property type="term" value="F:1-alkyl-2-acetylglycerophosphocholine esterase activity"/>
    <property type="evidence" value="ECO:0000314"/>
    <property type="project" value="UniProtKB"/>
</dbReference>
<dbReference type="GO" id="GO:0034186">
    <property type="term" value="F:apolipoprotein A-I binding"/>
    <property type="evidence" value="ECO:0000353"/>
    <property type="project" value="BHF-UCL"/>
</dbReference>
<dbReference type="GO" id="GO:0004607">
    <property type="term" value="F:phosphatidylcholine-sterol O-acyltransferase activity"/>
    <property type="evidence" value="ECO:0000314"/>
    <property type="project" value="UniProtKB"/>
</dbReference>
<dbReference type="GO" id="GO:0004623">
    <property type="term" value="F:phospholipase A2 activity"/>
    <property type="evidence" value="ECO:0007669"/>
    <property type="project" value="Ensembl"/>
</dbReference>
<dbReference type="GO" id="GO:0047179">
    <property type="term" value="F:platelet-activating factor acetyltransferase activity"/>
    <property type="evidence" value="ECO:0000314"/>
    <property type="project" value="UniProtKB"/>
</dbReference>
<dbReference type="GO" id="GO:0004771">
    <property type="term" value="F:sterol ester esterase activity"/>
    <property type="evidence" value="ECO:0000314"/>
    <property type="project" value="ARUK-UCL"/>
</dbReference>
<dbReference type="GO" id="GO:0046222">
    <property type="term" value="P:aflatoxin metabolic process"/>
    <property type="evidence" value="ECO:0007669"/>
    <property type="project" value="Ensembl"/>
</dbReference>
<dbReference type="GO" id="GO:0042632">
    <property type="term" value="P:cholesterol homeostasis"/>
    <property type="evidence" value="ECO:0000314"/>
    <property type="project" value="BHF-UCL"/>
</dbReference>
<dbReference type="GO" id="GO:0008203">
    <property type="term" value="P:cholesterol metabolic process"/>
    <property type="evidence" value="ECO:0000314"/>
    <property type="project" value="UniProtKB"/>
</dbReference>
<dbReference type="GO" id="GO:0030301">
    <property type="term" value="P:cholesterol transport"/>
    <property type="evidence" value="ECO:0000314"/>
    <property type="project" value="MGI"/>
</dbReference>
<dbReference type="GO" id="GO:0034375">
    <property type="term" value="P:high-density lipoprotein particle remodeling"/>
    <property type="evidence" value="ECO:0000314"/>
    <property type="project" value="UniProtKB"/>
</dbReference>
<dbReference type="GO" id="GO:0006629">
    <property type="term" value="P:lipid metabolic process"/>
    <property type="evidence" value="ECO:0000318"/>
    <property type="project" value="GO_Central"/>
</dbReference>
<dbReference type="GO" id="GO:0042158">
    <property type="term" value="P:lipoprotein biosynthetic process"/>
    <property type="evidence" value="ECO:0007669"/>
    <property type="project" value="Ensembl"/>
</dbReference>
<dbReference type="GO" id="GO:0006656">
    <property type="term" value="P:phosphatidylcholine biosynthetic process"/>
    <property type="evidence" value="ECO:0000314"/>
    <property type="project" value="BHF-UCL"/>
</dbReference>
<dbReference type="GO" id="GO:0046470">
    <property type="term" value="P:phosphatidylcholine metabolic process"/>
    <property type="evidence" value="ECO:0000314"/>
    <property type="project" value="UniProtKB"/>
</dbReference>
<dbReference type="GO" id="GO:0006644">
    <property type="term" value="P:phospholipid metabolic process"/>
    <property type="evidence" value="ECO:0000314"/>
    <property type="project" value="BHF-UCL"/>
</dbReference>
<dbReference type="GO" id="GO:0090107">
    <property type="term" value="P:regulation of high-density lipoprotein particle assembly"/>
    <property type="evidence" value="ECO:0007669"/>
    <property type="project" value="Ensembl"/>
</dbReference>
<dbReference type="GO" id="GO:0046688">
    <property type="term" value="P:response to copper ion"/>
    <property type="evidence" value="ECO:0007669"/>
    <property type="project" value="Ensembl"/>
</dbReference>
<dbReference type="GO" id="GO:0051384">
    <property type="term" value="P:response to glucocorticoid"/>
    <property type="evidence" value="ECO:0007669"/>
    <property type="project" value="Ensembl"/>
</dbReference>
<dbReference type="GO" id="GO:0043691">
    <property type="term" value="P:reverse cholesterol transport"/>
    <property type="evidence" value="ECO:0000314"/>
    <property type="project" value="BHF-UCL"/>
</dbReference>
<dbReference type="GO" id="GO:0034372">
    <property type="term" value="P:very-low-density lipoprotein particle remodeling"/>
    <property type="evidence" value="ECO:0000314"/>
    <property type="project" value="BHF-UCL"/>
</dbReference>
<dbReference type="FunFam" id="3.40.50.1820:FF:000090">
    <property type="entry name" value="Phosphatidylcholine-sterol acyltransferase"/>
    <property type="match status" value="1"/>
</dbReference>
<dbReference type="FunFam" id="3.40.50.1820:FF:000183">
    <property type="entry name" value="Phosphatidylcholine-sterol acyltransferase"/>
    <property type="match status" value="1"/>
</dbReference>
<dbReference type="Gene3D" id="3.40.50.1820">
    <property type="entry name" value="alpha/beta hydrolase"/>
    <property type="match status" value="3"/>
</dbReference>
<dbReference type="InterPro" id="IPR029058">
    <property type="entry name" value="AB_hydrolase_fold"/>
</dbReference>
<dbReference type="InterPro" id="IPR003386">
    <property type="entry name" value="LACT/PDAT_acylTrfase"/>
</dbReference>
<dbReference type="PANTHER" id="PTHR11440">
    <property type="entry name" value="LECITHIN-CHOLESTEROL ACYLTRANSFERASE-RELATED"/>
    <property type="match status" value="1"/>
</dbReference>
<dbReference type="Pfam" id="PF02450">
    <property type="entry name" value="LCAT"/>
    <property type="match status" value="1"/>
</dbReference>
<dbReference type="SUPFAM" id="SSF53474">
    <property type="entry name" value="alpha/beta-Hydrolases"/>
    <property type="match status" value="1"/>
</dbReference>
<dbReference type="PROSITE" id="PS00120">
    <property type="entry name" value="LIPASE_SER"/>
    <property type="match status" value="1"/>
</dbReference>
<protein>
    <recommendedName>
        <fullName>Phosphatidylcholine-sterol acyltransferase</fullName>
        <ecNumber evidence="2 3 9 20 24 25 27">2.3.1.43</ecNumber>
    </recommendedName>
    <alternativeName>
        <fullName>1-alkyl-2-acetylglycerophosphocholine esterase</fullName>
        <ecNumber evidence="32">3.1.1.47</ecNumber>
    </alternativeName>
    <alternativeName>
        <fullName>Lecithin-cholesterol acyltransferase</fullName>
    </alternativeName>
    <alternativeName>
        <fullName>Phospholipid-cholesterol acyltransferase</fullName>
    </alternativeName>
    <alternativeName>
        <fullName evidence="41">Platelet-activating factor acetylhydrolase</fullName>
        <shortName>PAF acetylhydrolase</shortName>
    </alternativeName>
</protein>
<name>LCAT_HUMAN</name>
<keyword id="KW-0002">3D-structure</keyword>
<keyword id="KW-0012">Acyltransferase</keyword>
<keyword id="KW-0153">Cholesterol metabolism</keyword>
<keyword id="KW-1212">Corneal dystrophy</keyword>
<keyword id="KW-0903">Direct protein sequencing</keyword>
<keyword id="KW-0225">Disease variant</keyword>
<keyword id="KW-1015">Disulfide bond</keyword>
<keyword id="KW-0325">Glycoprotein</keyword>
<keyword id="KW-0378">Hydrolase</keyword>
<keyword id="KW-0443">Lipid metabolism</keyword>
<keyword id="KW-1267">Proteomics identification</keyword>
<keyword id="KW-1185">Reference proteome</keyword>
<keyword id="KW-0964">Secreted</keyword>
<keyword id="KW-0732">Signal</keyword>
<keyword id="KW-0753">Steroid metabolism</keyword>
<keyword id="KW-1207">Sterol metabolism</keyword>
<keyword id="KW-0808">Transferase</keyword>
<accession>P04180</accession>
<accession>Q53XQ3</accession>
<evidence type="ECO:0000255" key="1">
    <source>
        <dbReference type="PROSITE-ProRule" id="PRU10037"/>
    </source>
</evidence>
<evidence type="ECO:0000269" key="2">
    <source>
    </source>
</evidence>
<evidence type="ECO:0000269" key="3">
    <source>
    </source>
</evidence>
<evidence type="ECO:0000269" key="4">
    <source>
    </source>
</evidence>
<evidence type="ECO:0000269" key="5">
    <source>
    </source>
</evidence>
<evidence type="ECO:0000269" key="6">
    <source>
    </source>
</evidence>
<evidence type="ECO:0000269" key="7">
    <source>
    </source>
</evidence>
<evidence type="ECO:0000269" key="8">
    <source>
    </source>
</evidence>
<evidence type="ECO:0000269" key="9">
    <source>
    </source>
</evidence>
<evidence type="ECO:0000269" key="10">
    <source>
    </source>
</evidence>
<evidence type="ECO:0000269" key="11">
    <source>
    </source>
</evidence>
<evidence type="ECO:0000269" key="12">
    <source>
    </source>
</evidence>
<evidence type="ECO:0000269" key="13">
    <source>
    </source>
</evidence>
<evidence type="ECO:0000269" key="14">
    <source>
    </source>
</evidence>
<evidence type="ECO:0000269" key="15">
    <source>
    </source>
</evidence>
<evidence type="ECO:0000269" key="16">
    <source>
    </source>
</evidence>
<evidence type="ECO:0000269" key="17">
    <source>
    </source>
</evidence>
<evidence type="ECO:0000269" key="18">
    <source>
    </source>
</evidence>
<evidence type="ECO:0000269" key="19">
    <source>
    </source>
</evidence>
<evidence type="ECO:0000269" key="20">
    <source>
    </source>
</evidence>
<evidence type="ECO:0000269" key="21">
    <source>
    </source>
</evidence>
<evidence type="ECO:0000269" key="22">
    <source>
    </source>
</evidence>
<evidence type="ECO:0000269" key="23">
    <source>
    </source>
</evidence>
<evidence type="ECO:0000269" key="24">
    <source>
    </source>
</evidence>
<evidence type="ECO:0000269" key="25">
    <source>
    </source>
</evidence>
<evidence type="ECO:0000269" key="26">
    <source>
    </source>
</evidence>
<evidence type="ECO:0000269" key="27">
    <source>
    </source>
</evidence>
<evidence type="ECO:0000269" key="28">
    <source>
    </source>
</evidence>
<evidence type="ECO:0000269" key="29">
    <source>
    </source>
</evidence>
<evidence type="ECO:0000269" key="30">
    <source>
    </source>
</evidence>
<evidence type="ECO:0000269" key="31">
    <source>
    </source>
</evidence>
<evidence type="ECO:0000269" key="32">
    <source>
    </source>
</evidence>
<evidence type="ECO:0000269" key="33">
    <source>
    </source>
</evidence>
<evidence type="ECO:0000269" key="34">
    <source>
    </source>
</evidence>
<evidence type="ECO:0000269" key="35">
    <source>
    </source>
</evidence>
<evidence type="ECO:0000269" key="36">
    <source>
    </source>
</evidence>
<evidence type="ECO:0000269" key="37">
    <source>
    </source>
</evidence>
<evidence type="ECO:0000269" key="38">
    <source>
    </source>
</evidence>
<evidence type="ECO:0000269" key="39">
    <source>
    </source>
</evidence>
<evidence type="ECO:0000269" key="40">
    <source>
    </source>
</evidence>
<evidence type="ECO:0000303" key="41">
    <source>
    </source>
</evidence>
<evidence type="ECO:0000305" key="42"/>
<evidence type="ECO:0000305" key="43">
    <source>
    </source>
</evidence>
<evidence type="ECO:0000305" key="44">
    <source>
    </source>
</evidence>
<evidence type="ECO:0000305" key="45">
    <source>
    </source>
</evidence>
<evidence type="ECO:0000305" key="46">
    <source>
    </source>
</evidence>
<evidence type="ECO:0007744" key="47">
    <source>
        <dbReference type="PDB" id="4X96"/>
    </source>
</evidence>
<evidence type="ECO:0007744" key="48">
    <source>
        <dbReference type="PDB" id="4XWG"/>
    </source>
</evidence>
<evidence type="ECO:0007744" key="49">
    <source>
        <dbReference type="PDB" id="4XX1"/>
    </source>
</evidence>
<evidence type="ECO:0007829" key="50">
    <source>
        <dbReference type="PDB" id="4XWG"/>
    </source>
</evidence>
<evidence type="ECO:0007829" key="51">
    <source>
        <dbReference type="PDB" id="5BV7"/>
    </source>
</evidence>
<evidence type="ECO:0007829" key="52">
    <source>
        <dbReference type="PDB" id="5TXF"/>
    </source>
</evidence>